<name>RL30_ECOLI</name>
<proteinExistence type="evidence at protein level"/>
<evidence type="ECO:0000255" key="1">
    <source>
        <dbReference type="HAMAP-Rule" id="MF_01371"/>
    </source>
</evidence>
<evidence type="ECO:0000269" key="2">
    <source>
    </source>
</evidence>
<evidence type="ECO:0000269" key="3">
    <source>
    </source>
</evidence>
<evidence type="ECO:0000269" key="4">
    <source>
    </source>
</evidence>
<evidence type="ECO:0000269" key="5">
    <source>
    </source>
</evidence>
<evidence type="ECO:0000269" key="6">
    <source>
    </source>
</evidence>
<evidence type="ECO:0000269" key="7">
    <source>
    </source>
</evidence>
<evidence type="ECO:0000269" key="8">
    <source>
    </source>
</evidence>
<evidence type="ECO:0000269" key="9">
    <source>
    </source>
</evidence>
<evidence type="ECO:0000269" key="10">
    <source>
    </source>
</evidence>
<evidence type="ECO:0000303" key="11">
    <source>
    </source>
</evidence>
<evidence type="ECO:0007829" key="12">
    <source>
        <dbReference type="PDB" id="6YS3"/>
    </source>
</evidence>
<evidence type="ECO:0007829" key="13">
    <source>
        <dbReference type="PDB" id="7ZQ5"/>
    </source>
</evidence>
<evidence type="ECO:0007829" key="14">
    <source>
        <dbReference type="PDB" id="8CGK"/>
    </source>
</evidence>
<sequence>MAKTIKITQTRSAIGRLPKHKATLLGLGLRRIGHTVEREDTPAIRGMINAVSFMVKVEE</sequence>
<dbReference type="EMBL" id="X01563">
    <property type="protein sequence ID" value="CAA25723.1"/>
    <property type="molecule type" value="Genomic_DNA"/>
</dbReference>
<dbReference type="EMBL" id="U18997">
    <property type="protein sequence ID" value="AAA58099.1"/>
    <property type="molecule type" value="Genomic_DNA"/>
</dbReference>
<dbReference type="EMBL" id="U00096">
    <property type="protein sequence ID" value="AAC76327.1"/>
    <property type="molecule type" value="Genomic_DNA"/>
</dbReference>
<dbReference type="EMBL" id="AP009048">
    <property type="protein sequence ID" value="BAE77989.1"/>
    <property type="molecule type" value="Genomic_DNA"/>
</dbReference>
<dbReference type="PIR" id="A65123">
    <property type="entry name" value="R5EC30"/>
</dbReference>
<dbReference type="RefSeq" id="NP_417761.1">
    <property type="nucleotide sequence ID" value="NC_000913.3"/>
</dbReference>
<dbReference type="RefSeq" id="WP_001140433.1">
    <property type="nucleotide sequence ID" value="NZ_STEB01000038.1"/>
</dbReference>
<dbReference type="PDB" id="1ML5">
    <property type="method" value="EM"/>
    <property type="resolution" value="14.00 A"/>
    <property type="chains" value="x=1-59"/>
</dbReference>
<dbReference type="PDB" id="2J28">
    <property type="method" value="EM"/>
    <property type="resolution" value="8.00 A"/>
    <property type="chains" value="Y=2-59"/>
</dbReference>
<dbReference type="PDB" id="2RDO">
    <property type="method" value="EM"/>
    <property type="resolution" value="9.10 A"/>
    <property type="chains" value="Y=2-59"/>
</dbReference>
<dbReference type="PDB" id="3BBX">
    <property type="method" value="EM"/>
    <property type="resolution" value="10.00 A"/>
    <property type="chains" value="Y=2-59"/>
</dbReference>
<dbReference type="PDB" id="3IY9">
    <property type="method" value="EM"/>
    <property type="resolution" value="14.10 A"/>
    <property type="chains" value="Y=2-59"/>
</dbReference>
<dbReference type="PDB" id="3J5L">
    <property type="method" value="EM"/>
    <property type="resolution" value="6.60 A"/>
    <property type="chains" value="Z=2-59"/>
</dbReference>
<dbReference type="PDB" id="3J7Z">
    <property type="method" value="EM"/>
    <property type="resolution" value="3.90 A"/>
    <property type="chains" value="Z=1-59"/>
</dbReference>
<dbReference type="PDB" id="3J8G">
    <property type="method" value="EM"/>
    <property type="resolution" value="5.00 A"/>
    <property type="chains" value="2=1-59"/>
</dbReference>
<dbReference type="PDB" id="3J9Y">
    <property type="method" value="EM"/>
    <property type="resolution" value="3.90 A"/>
    <property type="chains" value="Z=1-59"/>
</dbReference>
<dbReference type="PDB" id="3J9Z">
    <property type="method" value="EM"/>
    <property type="resolution" value="3.60 A"/>
    <property type="chains" value="LY=2-59"/>
</dbReference>
<dbReference type="PDB" id="3JA1">
    <property type="method" value="EM"/>
    <property type="resolution" value="3.60 A"/>
    <property type="chains" value="L1=2-59"/>
</dbReference>
<dbReference type="PDB" id="3JBU">
    <property type="method" value="EM"/>
    <property type="resolution" value="3.64 A"/>
    <property type="chains" value="2=1-59"/>
</dbReference>
<dbReference type="PDB" id="3JBV">
    <property type="method" value="EM"/>
    <property type="resolution" value="3.32 A"/>
    <property type="chains" value="2=1-59"/>
</dbReference>
<dbReference type="PDB" id="3JCD">
    <property type="method" value="EM"/>
    <property type="resolution" value="3.70 A"/>
    <property type="chains" value="Z=1-59"/>
</dbReference>
<dbReference type="PDB" id="3JCE">
    <property type="method" value="EM"/>
    <property type="resolution" value="3.20 A"/>
    <property type="chains" value="Z=1-59"/>
</dbReference>
<dbReference type="PDB" id="3JCJ">
    <property type="method" value="EM"/>
    <property type="resolution" value="3.70 A"/>
    <property type="chains" value="Y=1-59"/>
</dbReference>
<dbReference type="PDB" id="3JCN">
    <property type="method" value="EM"/>
    <property type="resolution" value="4.60 A"/>
    <property type="chains" value="Z=1-59"/>
</dbReference>
<dbReference type="PDB" id="4CSU">
    <property type="method" value="EM"/>
    <property type="resolution" value="5.50 A"/>
    <property type="chains" value="2=2-59"/>
</dbReference>
<dbReference type="PDB" id="4U1U">
    <property type="method" value="X-ray"/>
    <property type="resolution" value="2.95 A"/>
    <property type="chains" value="BZ/DZ=2-59"/>
</dbReference>
<dbReference type="PDB" id="4U1V">
    <property type="method" value="X-ray"/>
    <property type="resolution" value="3.00 A"/>
    <property type="chains" value="BZ/DZ=2-59"/>
</dbReference>
<dbReference type="PDB" id="4U20">
    <property type="method" value="X-ray"/>
    <property type="resolution" value="2.90 A"/>
    <property type="chains" value="BZ/DZ=2-59"/>
</dbReference>
<dbReference type="PDB" id="4U24">
    <property type="method" value="X-ray"/>
    <property type="resolution" value="2.90 A"/>
    <property type="chains" value="BZ/DZ=2-59"/>
</dbReference>
<dbReference type="PDB" id="4U25">
    <property type="method" value="X-ray"/>
    <property type="resolution" value="2.90 A"/>
    <property type="chains" value="BZ/DZ=2-59"/>
</dbReference>
<dbReference type="PDB" id="4U26">
    <property type="method" value="X-ray"/>
    <property type="resolution" value="2.80 A"/>
    <property type="chains" value="BZ/DZ=2-59"/>
</dbReference>
<dbReference type="PDB" id="4U27">
    <property type="method" value="X-ray"/>
    <property type="resolution" value="2.80 A"/>
    <property type="chains" value="BZ/DZ=2-59"/>
</dbReference>
<dbReference type="PDB" id="4UY8">
    <property type="method" value="EM"/>
    <property type="resolution" value="3.80 A"/>
    <property type="chains" value="Z=2-59"/>
</dbReference>
<dbReference type="PDB" id="4V47">
    <property type="method" value="EM"/>
    <property type="resolution" value="12.30 A"/>
    <property type="chains" value="AX=2-59"/>
</dbReference>
<dbReference type="PDB" id="4V48">
    <property type="method" value="EM"/>
    <property type="resolution" value="11.50 A"/>
    <property type="chains" value="AX=2-59"/>
</dbReference>
<dbReference type="PDB" id="4V4H">
    <property type="method" value="X-ray"/>
    <property type="resolution" value="3.46 A"/>
    <property type="chains" value="BY/DY=1-59"/>
</dbReference>
<dbReference type="PDB" id="4V4Q">
    <property type="method" value="X-ray"/>
    <property type="resolution" value="3.46 A"/>
    <property type="chains" value="BY/DY=2-59"/>
</dbReference>
<dbReference type="PDB" id="4V4V">
    <property type="method" value="EM"/>
    <property type="resolution" value="15.00 A"/>
    <property type="chains" value="BX=4-59"/>
</dbReference>
<dbReference type="PDB" id="4V4W">
    <property type="method" value="EM"/>
    <property type="resolution" value="15.00 A"/>
    <property type="chains" value="BX=4-59"/>
</dbReference>
<dbReference type="PDB" id="4V50">
    <property type="method" value="X-ray"/>
    <property type="resolution" value="3.22 A"/>
    <property type="chains" value="BZ/DZ=2-59"/>
</dbReference>
<dbReference type="PDB" id="4V52">
    <property type="method" value="X-ray"/>
    <property type="resolution" value="3.21 A"/>
    <property type="chains" value="BY/DY=2-59"/>
</dbReference>
<dbReference type="PDB" id="4V53">
    <property type="method" value="X-ray"/>
    <property type="resolution" value="3.54 A"/>
    <property type="chains" value="BY/DY=2-59"/>
</dbReference>
<dbReference type="PDB" id="4V54">
    <property type="method" value="X-ray"/>
    <property type="resolution" value="3.30 A"/>
    <property type="chains" value="BY/DY=2-59"/>
</dbReference>
<dbReference type="PDB" id="4V55">
    <property type="method" value="X-ray"/>
    <property type="resolution" value="4.00 A"/>
    <property type="chains" value="BY/DY=2-59"/>
</dbReference>
<dbReference type="PDB" id="4V56">
    <property type="method" value="X-ray"/>
    <property type="resolution" value="3.93 A"/>
    <property type="chains" value="BY/DY=2-59"/>
</dbReference>
<dbReference type="PDB" id="4V57">
    <property type="method" value="X-ray"/>
    <property type="resolution" value="3.50 A"/>
    <property type="chains" value="BY/DY=2-59"/>
</dbReference>
<dbReference type="PDB" id="4V5B">
    <property type="method" value="X-ray"/>
    <property type="resolution" value="3.74 A"/>
    <property type="chains" value="AY/CY=2-59"/>
</dbReference>
<dbReference type="PDB" id="4V5H">
    <property type="method" value="EM"/>
    <property type="resolution" value="5.80 A"/>
    <property type="chains" value="B2=2-59"/>
</dbReference>
<dbReference type="PDB" id="4V5Y">
    <property type="method" value="X-ray"/>
    <property type="resolution" value="4.45 A"/>
    <property type="chains" value="BY/DY=2-59"/>
</dbReference>
<dbReference type="PDB" id="4V64">
    <property type="method" value="X-ray"/>
    <property type="resolution" value="3.50 A"/>
    <property type="chains" value="BY/DY=2-59"/>
</dbReference>
<dbReference type="PDB" id="4V65">
    <property type="method" value="EM"/>
    <property type="resolution" value="9.00 A"/>
    <property type="chains" value="BR=1-59"/>
</dbReference>
<dbReference type="PDB" id="4V66">
    <property type="method" value="EM"/>
    <property type="resolution" value="9.00 A"/>
    <property type="chains" value="BR=1-59"/>
</dbReference>
<dbReference type="PDB" id="4V69">
    <property type="method" value="EM"/>
    <property type="resolution" value="6.70 A"/>
    <property type="chains" value="BZ=2-59"/>
</dbReference>
<dbReference type="PDB" id="4V6C">
    <property type="method" value="X-ray"/>
    <property type="resolution" value="3.19 A"/>
    <property type="chains" value="BZ/DZ=1-59"/>
</dbReference>
<dbReference type="PDB" id="4V6D">
    <property type="method" value="X-ray"/>
    <property type="resolution" value="3.81 A"/>
    <property type="chains" value="BZ/DZ=1-59"/>
</dbReference>
<dbReference type="PDB" id="4V6E">
    <property type="method" value="X-ray"/>
    <property type="resolution" value="3.71 A"/>
    <property type="chains" value="BZ/DZ=1-59"/>
</dbReference>
<dbReference type="PDB" id="4V6K">
    <property type="method" value="EM"/>
    <property type="resolution" value="8.25 A"/>
    <property type="chains" value="Aa=1-59"/>
</dbReference>
<dbReference type="PDB" id="4V6L">
    <property type="method" value="EM"/>
    <property type="resolution" value="13.20 A"/>
    <property type="chains" value="Ba=1-59"/>
</dbReference>
<dbReference type="PDB" id="4V6M">
    <property type="method" value="EM"/>
    <property type="resolution" value="7.10 A"/>
    <property type="chains" value="BZ=2-59"/>
</dbReference>
<dbReference type="PDB" id="4V6N">
    <property type="method" value="EM"/>
    <property type="resolution" value="12.10 A"/>
    <property type="chains" value="A1=2-59"/>
</dbReference>
<dbReference type="PDB" id="4V6O">
    <property type="method" value="EM"/>
    <property type="resolution" value="14.70 A"/>
    <property type="chains" value="B1=2-59"/>
</dbReference>
<dbReference type="PDB" id="4V6P">
    <property type="method" value="EM"/>
    <property type="resolution" value="13.50 A"/>
    <property type="chains" value="B1=2-59"/>
</dbReference>
<dbReference type="PDB" id="4V6Q">
    <property type="method" value="EM"/>
    <property type="resolution" value="11.50 A"/>
    <property type="chains" value="B1=2-59"/>
</dbReference>
<dbReference type="PDB" id="4V6R">
    <property type="method" value="EM"/>
    <property type="resolution" value="11.50 A"/>
    <property type="chains" value="B1=2-59"/>
</dbReference>
<dbReference type="PDB" id="4V6S">
    <property type="method" value="EM"/>
    <property type="resolution" value="13.10 A"/>
    <property type="chains" value="A1=2-59"/>
</dbReference>
<dbReference type="PDB" id="4V6T">
    <property type="method" value="EM"/>
    <property type="resolution" value="8.30 A"/>
    <property type="chains" value="BZ=2-59"/>
</dbReference>
<dbReference type="PDB" id="4V6V">
    <property type="method" value="EM"/>
    <property type="resolution" value="9.80 A"/>
    <property type="chains" value="B3=2-59"/>
</dbReference>
<dbReference type="PDB" id="4V6Y">
    <property type="method" value="EM"/>
    <property type="resolution" value="12.00 A"/>
    <property type="chains" value="BZ=1-59"/>
</dbReference>
<dbReference type="PDB" id="4V6Z">
    <property type="method" value="EM"/>
    <property type="resolution" value="12.00 A"/>
    <property type="chains" value="BZ=1-59"/>
</dbReference>
<dbReference type="PDB" id="4V70">
    <property type="method" value="EM"/>
    <property type="resolution" value="17.00 A"/>
    <property type="chains" value="BZ=1-59"/>
</dbReference>
<dbReference type="PDB" id="4V71">
    <property type="method" value="EM"/>
    <property type="resolution" value="20.00 A"/>
    <property type="chains" value="BZ=1-59"/>
</dbReference>
<dbReference type="PDB" id="4V72">
    <property type="method" value="EM"/>
    <property type="resolution" value="13.00 A"/>
    <property type="chains" value="BZ=1-59"/>
</dbReference>
<dbReference type="PDB" id="4V73">
    <property type="method" value="EM"/>
    <property type="resolution" value="15.00 A"/>
    <property type="chains" value="BZ=1-59"/>
</dbReference>
<dbReference type="PDB" id="4V74">
    <property type="method" value="EM"/>
    <property type="resolution" value="17.00 A"/>
    <property type="chains" value="BZ=1-59"/>
</dbReference>
<dbReference type="PDB" id="4V75">
    <property type="method" value="EM"/>
    <property type="resolution" value="12.00 A"/>
    <property type="chains" value="BZ=1-59"/>
</dbReference>
<dbReference type="PDB" id="4V76">
    <property type="method" value="EM"/>
    <property type="resolution" value="17.00 A"/>
    <property type="chains" value="BZ=1-59"/>
</dbReference>
<dbReference type="PDB" id="4V77">
    <property type="method" value="EM"/>
    <property type="resolution" value="17.00 A"/>
    <property type="chains" value="BZ=1-59"/>
</dbReference>
<dbReference type="PDB" id="4V78">
    <property type="method" value="EM"/>
    <property type="resolution" value="20.00 A"/>
    <property type="chains" value="BZ=1-59"/>
</dbReference>
<dbReference type="PDB" id="4V79">
    <property type="method" value="EM"/>
    <property type="resolution" value="15.00 A"/>
    <property type="chains" value="BZ=1-59"/>
</dbReference>
<dbReference type="PDB" id="4V7A">
    <property type="method" value="EM"/>
    <property type="resolution" value="9.00 A"/>
    <property type="chains" value="BZ=1-59"/>
</dbReference>
<dbReference type="PDB" id="4V7B">
    <property type="method" value="EM"/>
    <property type="resolution" value="6.80 A"/>
    <property type="chains" value="BZ=1-59"/>
</dbReference>
<dbReference type="PDB" id="4V7C">
    <property type="method" value="EM"/>
    <property type="resolution" value="7.60 A"/>
    <property type="chains" value="B2=2-59"/>
</dbReference>
<dbReference type="PDB" id="4V7D">
    <property type="method" value="EM"/>
    <property type="resolution" value="7.60 A"/>
    <property type="chains" value="A3=2-59"/>
</dbReference>
<dbReference type="PDB" id="4V7I">
    <property type="method" value="EM"/>
    <property type="resolution" value="9.60 A"/>
    <property type="chains" value="AZ=1-59"/>
</dbReference>
<dbReference type="PDB" id="4V7S">
    <property type="method" value="X-ray"/>
    <property type="resolution" value="3.25 A"/>
    <property type="chains" value="BZ/DZ=2-59"/>
</dbReference>
<dbReference type="PDB" id="4V7T">
    <property type="method" value="X-ray"/>
    <property type="resolution" value="3.19 A"/>
    <property type="chains" value="BZ/DZ=2-59"/>
</dbReference>
<dbReference type="PDB" id="4V7U">
    <property type="method" value="X-ray"/>
    <property type="resolution" value="3.10 A"/>
    <property type="chains" value="BZ/DZ=2-59"/>
</dbReference>
<dbReference type="PDB" id="4V7V">
    <property type="method" value="X-ray"/>
    <property type="resolution" value="3.29 A"/>
    <property type="chains" value="BZ/DZ=2-59"/>
</dbReference>
<dbReference type="PDB" id="4V85">
    <property type="method" value="X-ray"/>
    <property type="resolution" value="3.20 A"/>
    <property type="chains" value="B3=1-59"/>
</dbReference>
<dbReference type="PDB" id="4V89">
    <property type="method" value="X-ray"/>
    <property type="resolution" value="3.70 A"/>
    <property type="chains" value="B3=1-59"/>
</dbReference>
<dbReference type="PDB" id="4V9C">
    <property type="method" value="X-ray"/>
    <property type="resolution" value="3.30 A"/>
    <property type="chains" value="BZ/DZ=1-59"/>
</dbReference>
<dbReference type="PDB" id="4V9D">
    <property type="method" value="X-ray"/>
    <property type="resolution" value="3.00 A"/>
    <property type="chains" value="CZ/DZ=2-59"/>
</dbReference>
<dbReference type="PDB" id="4V9O">
    <property type="method" value="X-ray"/>
    <property type="resolution" value="2.90 A"/>
    <property type="chains" value="AZ/CZ/EZ/GZ=1-59"/>
</dbReference>
<dbReference type="PDB" id="4V9P">
    <property type="method" value="X-ray"/>
    <property type="resolution" value="2.90 A"/>
    <property type="chains" value="AZ/CZ/EZ/GZ=1-59"/>
</dbReference>
<dbReference type="PDB" id="4WF1">
    <property type="method" value="X-ray"/>
    <property type="resolution" value="3.09 A"/>
    <property type="chains" value="BZ/DZ=2-59"/>
</dbReference>
<dbReference type="PDB" id="4WOI">
    <property type="method" value="X-ray"/>
    <property type="resolution" value="3.00 A"/>
    <property type="chains" value="BZ/CZ=1-59"/>
</dbReference>
<dbReference type="PDB" id="4WWW">
    <property type="method" value="X-ray"/>
    <property type="resolution" value="3.10 A"/>
    <property type="chains" value="RZ/YZ=2-59"/>
</dbReference>
<dbReference type="PDB" id="4YBB">
    <property type="method" value="X-ray"/>
    <property type="resolution" value="2.10 A"/>
    <property type="chains" value="C0/D0=2-59"/>
</dbReference>
<dbReference type="PDB" id="5ADY">
    <property type="method" value="EM"/>
    <property type="resolution" value="4.50 A"/>
    <property type="chains" value="Z=1-59"/>
</dbReference>
<dbReference type="PDB" id="5AFI">
    <property type="method" value="EM"/>
    <property type="resolution" value="2.90 A"/>
    <property type="chains" value="Z=1-59"/>
</dbReference>
<dbReference type="PDB" id="5AKA">
    <property type="method" value="EM"/>
    <property type="resolution" value="5.70 A"/>
    <property type="chains" value="Y=2-59"/>
</dbReference>
<dbReference type="PDB" id="5GAD">
    <property type="method" value="EM"/>
    <property type="resolution" value="3.70 A"/>
    <property type="chains" value="a=1-59"/>
</dbReference>
<dbReference type="PDB" id="5GAE">
    <property type="method" value="EM"/>
    <property type="resolution" value="3.33 A"/>
    <property type="chains" value="a=1-59"/>
</dbReference>
<dbReference type="PDB" id="5GAF">
    <property type="method" value="EM"/>
    <property type="resolution" value="4.30 A"/>
    <property type="chains" value="a=2-59"/>
</dbReference>
<dbReference type="PDB" id="5GAG">
    <property type="method" value="EM"/>
    <property type="resolution" value="3.80 A"/>
    <property type="chains" value="a=1-59"/>
</dbReference>
<dbReference type="PDB" id="5GAH">
    <property type="method" value="EM"/>
    <property type="resolution" value="3.80 A"/>
    <property type="chains" value="a=1-59"/>
</dbReference>
<dbReference type="PDB" id="5H5U">
    <property type="method" value="EM"/>
    <property type="resolution" value="3.00 A"/>
    <property type="chains" value="a=2-59"/>
</dbReference>
<dbReference type="PDB" id="5IQR">
    <property type="method" value="EM"/>
    <property type="resolution" value="3.00 A"/>
    <property type="chains" value="Z=1-59"/>
</dbReference>
<dbReference type="PDB" id="5IT8">
    <property type="method" value="X-ray"/>
    <property type="resolution" value="3.12 A"/>
    <property type="chains" value="C0/D0=2-59"/>
</dbReference>
<dbReference type="PDB" id="5J5B">
    <property type="method" value="X-ray"/>
    <property type="resolution" value="2.80 A"/>
    <property type="chains" value="C0/D0=2-59"/>
</dbReference>
<dbReference type="PDB" id="5J7L">
    <property type="method" value="X-ray"/>
    <property type="resolution" value="3.00 A"/>
    <property type="chains" value="C0/D0=2-59"/>
</dbReference>
<dbReference type="PDB" id="5J88">
    <property type="method" value="X-ray"/>
    <property type="resolution" value="3.32 A"/>
    <property type="chains" value="C0/D0=2-59"/>
</dbReference>
<dbReference type="PDB" id="5J8A">
    <property type="method" value="X-ray"/>
    <property type="resolution" value="3.10 A"/>
    <property type="chains" value="C0/D0=2-59"/>
</dbReference>
<dbReference type="PDB" id="5J91">
    <property type="method" value="X-ray"/>
    <property type="resolution" value="2.96 A"/>
    <property type="chains" value="C0/D0=2-59"/>
</dbReference>
<dbReference type="PDB" id="5JC9">
    <property type="method" value="X-ray"/>
    <property type="resolution" value="3.03 A"/>
    <property type="chains" value="C0/D0=2-59"/>
</dbReference>
<dbReference type="PDB" id="5JTE">
    <property type="method" value="EM"/>
    <property type="resolution" value="3.60 A"/>
    <property type="chains" value="BZ=1-59"/>
</dbReference>
<dbReference type="PDB" id="5JU8">
    <property type="method" value="EM"/>
    <property type="resolution" value="3.60 A"/>
    <property type="chains" value="BZ=1-59"/>
</dbReference>
<dbReference type="PDB" id="5KCR">
    <property type="method" value="EM"/>
    <property type="resolution" value="3.60 A"/>
    <property type="chains" value="13=1-59"/>
</dbReference>
<dbReference type="PDB" id="5KCS">
    <property type="method" value="EM"/>
    <property type="resolution" value="3.90 A"/>
    <property type="chains" value="13=1-59"/>
</dbReference>
<dbReference type="PDB" id="5KPS">
    <property type="method" value="EM"/>
    <property type="resolution" value="3.90 A"/>
    <property type="chains" value="Z=1-59"/>
</dbReference>
<dbReference type="PDB" id="5KPV">
    <property type="method" value="EM"/>
    <property type="resolution" value="4.10 A"/>
    <property type="chains" value="Y=1-59"/>
</dbReference>
<dbReference type="PDB" id="5KPW">
    <property type="method" value="EM"/>
    <property type="resolution" value="3.90 A"/>
    <property type="chains" value="Y=1-59"/>
</dbReference>
<dbReference type="PDB" id="5KPX">
    <property type="method" value="EM"/>
    <property type="resolution" value="3.90 A"/>
    <property type="chains" value="Y=1-59"/>
</dbReference>
<dbReference type="PDB" id="5L3P">
    <property type="method" value="EM"/>
    <property type="resolution" value="3.70 A"/>
    <property type="chains" value="3=1-59"/>
</dbReference>
<dbReference type="PDB" id="5LZA">
    <property type="method" value="EM"/>
    <property type="resolution" value="3.60 A"/>
    <property type="chains" value="Z=2-59"/>
</dbReference>
<dbReference type="PDB" id="5LZB">
    <property type="method" value="EM"/>
    <property type="resolution" value="5.30 A"/>
    <property type="chains" value="Z=2-59"/>
</dbReference>
<dbReference type="PDB" id="5LZC">
    <property type="method" value="EM"/>
    <property type="resolution" value="4.80 A"/>
    <property type="chains" value="Z=2-59"/>
</dbReference>
<dbReference type="PDB" id="5LZD">
    <property type="method" value="EM"/>
    <property type="resolution" value="3.40 A"/>
    <property type="chains" value="Z=2-59"/>
</dbReference>
<dbReference type="PDB" id="5LZE">
    <property type="method" value="EM"/>
    <property type="resolution" value="3.50 A"/>
    <property type="chains" value="Z=2-59"/>
</dbReference>
<dbReference type="PDB" id="5LZF">
    <property type="method" value="EM"/>
    <property type="resolution" value="4.60 A"/>
    <property type="chains" value="Z=2-59"/>
</dbReference>
<dbReference type="PDB" id="5MDV">
    <property type="method" value="EM"/>
    <property type="resolution" value="2.97 A"/>
    <property type="chains" value="Z=1-59"/>
</dbReference>
<dbReference type="PDB" id="5MDW">
    <property type="method" value="EM"/>
    <property type="resolution" value="3.06 A"/>
    <property type="chains" value="Z=1-59"/>
</dbReference>
<dbReference type="PDB" id="5MDY">
    <property type="method" value="EM"/>
    <property type="resolution" value="3.35 A"/>
    <property type="chains" value="Z=1-59"/>
</dbReference>
<dbReference type="PDB" id="5MDZ">
    <property type="method" value="EM"/>
    <property type="resolution" value="3.10 A"/>
    <property type="chains" value="Z=1-59"/>
</dbReference>
<dbReference type="PDB" id="5MGP">
    <property type="method" value="EM"/>
    <property type="resolution" value="3.10 A"/>
    <property type="chains" value="Z=2-59"/>
</dbReference>
<dbReference type="PDB" id="5NCO">
    <property type="method" value="EM"/>
    <property type="resolution" value="4.80 A"/>
    <property type="chains" value="a=2-59"/>
</dbReference>
<dbReference type="PDB" id="5NP6">
    <property type="method" value="EM"/>
    <property type="resolution" value="3.60 A"/>
    <property type="chains" value="x=2-59"/>
</dbReference>
<dbReference type="PDB" id="5NWY">
    <property type="method" value="EM"/>
    <property type="resolution" value="2.93 A"/>
    <property type="chains" value="m=1-59"/>
</dbReference>
<dbReference type="PDB" id="5O2R">
    <property type="method" value="EM"/>
    <property type="resolution" value="3.40 A"/>
    <property type="chains" value="Z=2-59"/>
</dbReference>
<dbReference type="PDB" id="5U4I">
    <property type="method" value="EM"/>
    <property type="resolution" value="3.50 A"/>
    <property type="chains" value="0=1-59"/>
</dbReference>
<dbReference type="PDB" id="5U9F">
    <property type="method" value="EM"/>
    <property type="resolution" value="3.20 A"/>
    <property type="chains" value="28=1-59"/>
</dbReference>
<dbReference type="PDB" id="5U9G">
    <property type="method" value="EM"/>
    <property type="resolution" value="3.20 A"/>
    <property type="chains" value="28=1-59"/>
</dbReference>
<dbReference type="PDB" id="5UYK">
    <property type="method" value="EM"/>
    <property type="resolution" value="3.90 A"/>
    <property type="chains" value="28=2-59"/>
</dbReference>
<dbReference type="PDB" id="5UYL">
    <property type="method" value="EM"/>
    <property type="resolution" value="3.60 A"/>
    <property type="chains" value="28=2-59"/>
</dbReference>
<dbReference type="PDB" id="5UYM">
    <property type="method" value="EM"/>
    <property type="resolution" value="3.20 A"/>
    <property type="chains" value="28=2-59"/>
</dbReference>
<dbReference type="PDB" id="5UYN">
    <property type="method" value="EM"/>
    <property type="resolution" value="4.00 A"/>
    <property type="chains" value="28=2-59"/>
</dbReference>
<dbReference type="PDB" id="5UYP">
    <property type="method" value="EM"/>
    <property type="resolution" value="3.90 A"/>
    <property type="chains" value="28=2-59"/>
</dbReference>
<dbReference type="PDB" id="5UYQ">
    <property type="method" value="EM"/>
    <property type="resolution" value="3.80 A"/>
    <property type="chains" value="28=2-59"/>
</dbReference>
<dbReference type="PDB" id="5WDT">
    <property type="method" value="EM"/>
    <property type="resolution" value="3.00 A"/>
    <property type="chains" value="Z=3-58"/>
</dbReference>
<dbReference type="PDB" id="5WE4">
    <property type="method" value="EM"/>
    <property type="resolution" value="3.10 A"/>
    <property type="chains" value="Z=3-58"/>
</dbReference>
<dbReference type="PDB" id="5WE6">
    <property type="method" value="EM"/>
    <property type="resolution" value="3.40 A"/>
    <property type="chains" value="Z=3-58"/>
</dbReference>
<dbReference type="PDB" id="5WF0">
    <property type="method" value="EM"/>
    <property type="resolution" value="3.60 A"/>
    <property type="chains" value="Z=3-58"/>
</dbReference>
<dbReference type="PDB" id="5WFK">
    <property type="method" value="EM"/>
    <property type="resolution" value="3.40 A"/>
    <property type="chains" value="Z=3-58"/>
</dbReference>
<dbReference type="PDB" id="5WFS">
    <property type="method" value="EM"/>
    <property type="resolution" value="3.00 A"/>
    <property type="chains" value="Z=3-58"/>
</dbReference>
<dbReference type="PDB" id="6BU8">
    <property type="method" value="EM"/>
    <property type="resolution" value="3.50 A"/>
    <property type="chains" value="28=2-59"/>
</dbReference>
<dbReference type="PDB" id="6BY1">
    <property type="method" value="X-ray"/>
    <property type="resolution" value="3.94 A"/>
    <property type="chains" value="CZ/DZ=2-59"/>
</dbReference>
<dbReference type="PDB" id="6C4I">
    <property type="method" value="EM"/>
    <property type="resolution" value="3.24 A"/>
    <property type="chains" value="0=1-59"/>
</dbReference>
<dbReference type="PDB" id="6DNC">
    <property type="method" value="EM"/>
    <property type="resolution" value="3.70 A"/>
    <property type="chains" value="DA=1-59"/>
</dbReference>
<dbReference type="PDB" id="6ENF">
    <property type="method" value="EM"/>
    <property type="resolution" value="3.20 A"/>
    <property type="chains" value="Z=2-59"/>
</dbReference>
<dbReference type="PDB" id="6ENJ">
    <property type="method" value="EM"/>
    <property type="resolution" value="3.70 A"/>
    <property type="chains" value="Z=2-59"/>
</dbReference>
<dbReference type="PDB" id="6ENU">
    <property type="method" value="EM"/>
    <property type="resolution" value="3.10 A"/>
    <property type="chains" value="Z=2-59"/>
</dbReference>
<dbReference type="PDB" id="6GBZ">
    <property type="method" value="EM"/>
    <property type="resolution" value="3.80 A"/>
    <property type="chains" value="Z=2-59"/>
</dbReference>
<dbReference type="PDB" id="6GC0">
    <property type="method" value="EM"/>
    <property type="resolution" value="3.80 A"/>
    <property type="chains" value="Z=2-59"/>
</dbReference>
<dbReference type="PDB" id="6GC4">
    <property type="method" value="EM"/>
    <property type="resolution" value="4.30 A"/>
    <property type="chains" value="Z=2-59"/>
</dbReference>
<dbReference type="PDB" id="6GC6">
    <property type="method" value="EM"/>
    <property type="resolution" value="4.30 A"/>
    <property type="chains" value="Z=2-59"/>
</dbReference>
<dbReference type="PDB" id="6GC7">
    <property type="method" value="EM"/>
    <property type="resolution" value="4.30 A"/>
    <property type="chains" value="Z=2-59"/>
</dbReference>
<dbReference type="PDB" id="6GC8">
    <property type="method" value="EM"/>
    <property type="resolution" value="3.80 A"/>
    <property type="chains" value="Z=2-59"/>
</dbReference>
<dbReference type="PDB" id="6GWT">
    <property type="method" value="EM"/>
    <property type="resolution" value="3.80 A"/>
    <property type="chains" value="Z=2-59"/>
</dbReference>
<dbReference type="PDB" id="6GXM">
    <property type="method" value="EM"/>
    <property type="resolution" value="3.80 A"/>
    <property type="chains" value="Z=2-59"/>
</dbReference>
<dbReference type="PDB" id="6GXN">
    <property type="method" value="EM"/>
    <property type="resolution" value="3.90 A"/>
    <property type="chains" value="Z=2-59"/>
</dbReference>
<dbReference type="PDB" id="6GXO">
    <property type="method" value="EM"/>
    <property type="resolution" value="3.90 A"/>
    <property type="chains" value="Z=2-59"/>
</dbReference>
<dbReference type="PDB" id="6GXP">
    <property type="method" value="EM"/>
    <property type="resolution" value="4.40 A"/>
    <property type="chains" value="Z=2-59"/>
</dbReference>
<dbReference type="PDB" id="6H4N">
    <property type="method" value="EM"/>
    <property type="resolution" value="3.00 A"/>
    <property type="chains" value="Z=2-59"/>
</dbReference>
<dbReference type="PDB" id="6H58">
    <property type="method" value="EM"/>
    <property type="resolution" value="7.90 A"/>
    <property type="chains" value="Z/ZZ=2-59"/>
</dbReference>
<dbReference type="PDB" id="6HRM">
    <property type="method" value="EM"/>
    <property type="resolution" value="2.96 A"/>
    <property type="chains" value="Z=2-59"/>
</dbReference>
<dbReference type="PDB" id="6I0Y">
    <property type="method" value="EM"/>
    <property type="resolution" value="3.20 A"/>
    <property type="chains" value="Z=2-59"/>
</dbReference>
<dbReference type="PDB" id="6I7V">
    <property type="method" value="X-ray"/>
    <property type="resolution" value="2.90 A"/>
    <property type="chains" value="C0/D0=2-59"/>
</dbReference>
<dbReference type="PDB" id="6O9J">
    <property type="method" value="EM"/>
    <property type="resolution" value="3.90 A"/>
    <property type="chains" value="Y=2-59"/>
</dbReference>
<dbReference type="PDB" id="6O9K">
    <property type="method" value="EM"/>
    <property type="resolution" value="4.00 A"/>
    <property type="chains" value="3=2-59"/>
</dbReference>
<dbReference type="PDB" id="6OFX">
    <property type="method" value="EM"/>
    <property type="resolution" value="3.30 A"/>
    <property type="chains" value="z=2-59"/>
</dbReference>
<dbReference type="PDB" id="6OG7">
    <property type="method" value="EM"/>
    <property type="resolution" value="3.30 A"/>
    <property type="chains" value="z=2-59"/>
</dbReference>
<dbReference type="PDB" id="6OGF">
    <property type="method" value="EM"/>
    <property type="resolution" value="3.90 A"/>
    <property type="chains" value="z=1-59"/>
</dbReference>
<dbReference type="PDB" id="6OGG">
    <property type="method" value="EM"/>
    <property type="resolution" value="4.20 A"/>
    <property type="chains" value="z=1-59"/>
</dbReference>
<dbReference type="PDB" id="6OGI">
    <property type="method" value="EM"/>
    <property type="resolution" value="3.40 A"/>
    <property type="chains" value="z=1-59"/>
</dbReference>
<dbReference type="PDB" id="6OM6">
    <property type="method" value="EM"/>
    <property type="resolution" value="3.10 A"/>
    <property type="chains" value="Z=1-59"/>
</dbReference>
<dbReference type="PDB" id="6ORE">
    <property type="method" value="EM"/>
    <property type="resolution" value="2.90 A"/>
    <property type="chains" value="Z=2-59"/>
</dbReference>
<dbReference type="PDB" id="6ORL">
    <property type="method" value="EM"/>
    <property type="resolution" value="3.50 A"/>
    <property type="chains" value="Z=2-59"/>
</dbReference>
<dbReference type="PDB" id="6OSK">
    <property type="method" value="EM"/>
    <property type="resolution" value="3.60 A"/>
    <property type="chains" value="Z=2-59"/>
</dbReference>
<dbReference type="PDB" id="6OSQ">
    <property type="method" value="EM"/>
    <property type="resolution" value="3.50 A"/>
    <property type="chains" value="Z=2-59"/>
</dbReference>
<dbReference type="PDB" id="6OST">
    <property type="method" value="EM"/>
    <property type="resolution" value="4.20 A"/>
    <property type="chains" value="Z=2-59"/>
</dbReference>
<dbReference type="PDB" id="6OT3">
    <property type="method" value="EM"/>
    <property type="resolution" value="3.90 A"/>
    <property type="chains" value="Z=2-59"/>
</dbReference>
<dbReference type="PDB" id="6OUO">
    <property type="method" value="EM"/>
    <property type="resolution" value="3.70 A"/>
    <property type="chains" value="Z=2-59"/>
</dbReference>
<dbReference type="PDB" id="6PJ6">
    <property type="method" value="EM"/>
    <property type="resolution" value="2.20 A"/>
    <property type="chains" value="h=2-59"/>
</dbReference>
<dbReference type="PDB" id="6Q98">
    <property type="method" value="EM"/>
    <property type="resolution" value="4.30 A"/>
    <property type="chains" value="Z=1-59"/>
</dbReference>
<dbReference type="PDB" id="6Q9A">
    <property type="method" value="EM"/>
    <property type="resolution" value="3.70 A"/>
    <property type="chains" value="Z=3-58"/>
</dbReference>
<dbReference type="PDB" id="6QDW">
    <property type="method" value="EM"/>
    <property type="resolution" value="2.83 A"/>
    <property type="chains" value="2=1-59"/>
</dbReference>
<dbReference type="PDB" id="6QUL">
    <property type="method" value="EM"/>
    <property type="resolution" value="3.00 A"/>
    <property type="chains" value="a=1-59"/>
</dbReference>
<dbReference type="PDB" id="6S0K">
    <property type="method" value="EM"/>
    <property type="resolution" value="3.10 A"/>
    <property type="chains" value="a=1-59"/>
</dbReference>
<dbReference type="PDB" id="6SZS">
    <property type="method" value="EM"/>
    <property type="resolution" value="3.06 A"/>
    <property type="chains" value="Z=1-59"/>
</dbReference>
<dbReference type="PDB" id="6TBV">
    <property type="method" value="EM"/>
    <property type="resolution" value="2.70 A"/>
    <property type="chains" value="L301=1-59"/>
</dbReference>
<dbReference type="PDB" id="6TC3">
    <property type="method" value="EM"/>
    <property type="resolution" value="2.70 A"/>
    <property type="chains" value="L301=1-59"/>
</dbReference>
<dbReference type="PDB" id="6U48">
    <property type="method" value="EM"/>
    <property type="resolution" value="2.87 A"/>
    <property type="chains" value="C0=2-59"/>
</dbReference>
<dbReference type="PDB" id="6VU3">
    <property type="method" value="EM"/>
    <property type="resolution" value="3.70 A"/>
    <property type="chains" value="f=2-59"/>
</dbReference>
<dbReference type="PDB" id="6VWL">
    <property type="method" value="EM"/>
    <property type="resolution" value="3.10 A"/>
    <property type="chains" value="X=1-59"/>
</dbReference>
<dbReference type="PDB" id="6VWM">
    <property type="method" value="EM"/>
    <property type="resolution" value="3.40 A"/>
    <property type="chains" value="X=1-59"/>
</dbReference>
<dbReference type="PDB" id="6VWN">
    <property type="method" value="EM"/>
    <property type="resolution" value="3.40 A"/>
    <property type="chains" value="X=1-59"/>
</dbReference>
<dbReference type="PDB" id="6VYQ">
    <property type="method" value="EM"/>
    <property type="resolution" value="3.70 A"/>
    <property type="chains" value="f=1-59"/>
</dbReference>
<dbReference type="PDB" id="6VYR">
    <property type="method" value="EM"/>
    <property type="resolution" value="3.80 A"/>
    <property type="chains" value="f=1-59"/>
</dbReference>
<dbReference type="PDB" id="6VYS">
    <property type="method" value="EM"/>
    <property type="resolution" value="3.70 A"/>
    <property type="chains" value="f=1-59"/>
</dbReference>
<dbReference type="PDB" id="6VYT">
    <property type="method" value="EM"/>
    <property type="resolution" value="14.00 A"/>
    <property type="chains" value="f=1-59"/>
</dbReference>
<dbReference type="PDB" id="6VYU">
    <property type="method" value="EM"/>
    <property type="resolution" value="7.00 A"/>
    <property type="chains" value="f=1-59"/>
</dbReference>
<dbReference type="PDB" id="6VYW">
    <property type="method" value="EM"/>
    <property type="resolution" value="7.00 A"/>
    <property type="chains" value="f=1-59"/>
</dbReference>
<dbReference type="PDB" id="6VYX">
    <property type="method" value="EM"/>
    <property type="resolution" value="9.90 A"/>
    <property type="chains" value="f=1-59"/>
</dbReference>
<dbReference type="PDB" id="6VYY">
    <property type="method" value="EM"/>
    <property type="resolution" value="9.90 A"/>
    <property type="chains" value="f=1-59"/>
</dbReference>
<dbReference type="PDB" id="6VYZ">
    <property type="method" value="EM"/>
    <property type="resolution" value="9.90 A"/>
    <property type="chains" value="f=1-59"/>
</dbReference>
<dbReference type="PDB" id="6VZ2">
    <property type="method" value="EM"/>
    <property type="resolution" value="10.00 A"/>
    <property type="chains" value="f=2-59"/>
</dbReference>
<dbReference type="PDB" id="6VZ3">
    <property type="method" value="EM"/>
    <property type="resolution" value="8.90 A"/>
    <property type="chains" value="f=2-59"/>
</dbReference>
<dbReference type="PDB" id="6VZ5">
    <property type="method" value="EM"/>
    <property type="resolution" value="8.90 A"/>
    <property type="chains" value="f=1-59"/>
</dbReference>
<dbReference type="PDB" id="6VZ7">
    <property type="method" value="EM"/>
    <property type="resolution" value="7.00 A"/>
    <property type="chains" value="f=2-59"/>
</dbReference>
<dbReference type="PDB" id="6VZJ">
    <property type="method" value="EM"/>
    <property type="resolution" value="4.10 A"/>
    <property type="chains" value="f=2-59"/>
</dbReference>
<dbReference type="PDB" id="6WD0">
    <property type="method" value="EM"/>
    <property type="resolution" value="3.00 A"/>
    <property type="chains" value="z=2-59"/>
</dbReference>
<dbReference type="PDB" id="6WD1">
    <property type="method" value="EM"/>
    <property type="resolution" value="3.30 A"/>
    <property type="chains" value="z=2-59"/>
</dbReference>
<dbReference type="PDB" id="6WD2">
    <property type="method" value="EM"/>
    <property type="resolution" value="3.60 A"/>
    <property type="chains" value="z=2-59"/>
</dbReference>
<dbReference type="PDB" id="6WD3">
    <property type="method" value="EM"/>
    <property type="resolution" value="3.60 A"/>
    <property type="chains" value="z=2-59"/>
</dbReference>
<dbReference type="PDB" id="6WD4">
    <property type="method" value="EM"/>
    <property type="resolution" value="3.70 A"/>
    <property type="chains" value="z=2-59"/>
</dbReference>
<dbReference type="PDB" id="6WD5">
    <property type="method" value="EM"/>
    <property type="resolution" value="3.60 A"/>
    <property type="chains" value="z=2-59"/>
</dbReference>
<dbReference type="PDB" id="6WD6">
    <property type="method" value="EM"/>
    <property type="resolution" value="3.70 A"/>
    <property type="chains" value="z=2-59"/>
</dbReference>
<dbReference type="PDB" id="6WD7">
    <property type="method" value="EM"/>
    <property type="resolution" value="3.90 A"/>
    <property type="chains" value="z=2-59"/>
</dbReference>
<dbReference type="PDB" id="6WD8">
    <property type="method" value="EM"/>
    <property type="resolution" value="3.70 A"/>
    <property type="chains" value="z=2-59"/>
</dbReference>
<dbReference type="PDB" id="6WD9">
    <property type="method" value="EM"/>
    <property type="resolution" value="3.70 A"/>
    <property type="chains" value="z=2-59"/>
</dbReference>
<dbReference type="PDB" id="6WDA">
    <property type="method" value="EM"/>
    <property type="resolution" value="3.80 A"/>
    <property type="chains" value="z=2-59"/>
</dbReference>
<dbReference type="PDB" id="6WDB">
    <property type="method" value="EM"/>
    <property type="resolution" value="4.00 A"/>
    <property type="chains" value="z=2-59"/>
</dbReference>
<dbReference type="PDB" id="6WDC">
    <property type="method" value="EM"/>
    <property type="resolution" value="4.20 A"/>
    <property type="chains" value="z=2-59"/>
</dbReference>
<dbReference type="PDB" id="6WDD">
    <property type="method" value="EM"/>
    <property type="resolution" value="3.20 A"/>
    <property type="chains" value="z=2-59"/>
</dbReference>
<dbReference type="PDB" id="6WDE">
    <property type="method" value="EM"/>
    <property type="resolution" value="3.00 A"/>
    <property type="chains" value="z=2-59"/>
</dbReference>
<dbReference type="PDB" id="6WDF">
    <property type="method" value="EM"/>
    <property type="resolution" value="3.30 A"/>
    <property type="chains" value="z=2-59"/>
</dbReference>
<dbReference type="PDB" id="6WDG">
    <property type="method" value="EM"/>
    <property type="resolution" value="3.30 A"/>
    <property type="chains" value="z=2-59"/>
</dbReference>
<dbReference type="PDB" id="6WDH">
    <property type="method" value="EM"/>
    <property type="resolution" value="4.30 A"/>
    <property type="chains" value="z=2-59"/>
</dbReference>
<dbReference type="PDB" id="6WDI">
    <property type="method" value="EM"/>
    <property type="resolution" value="4.00 A"/>
    <property type="chains" value="z=2-59"/>
</dbReference>
<dbReference type="PDB" id="6WDJ">
    <property type="method" value="EM"/>
    <property type="resolution" value="3.70 A"/>
    <property type="chains" value="z=2-59"/>
</dbReference>
<dbReference type="PDB" id="6WDK">
    <property type="method" value="EM"/>
    <property type="resolution" value="3.60 A"/>
    <property type="chains" value="z=2-59"/>
</dbReference>
<dbReference type="PDB" id="6WDL">
    <property type="method" value="EM"/>
    <property type="resolution" value="3.70 A"/>
    <property type="chains" value="z=2-59"/>
</dbReference>
<dbReference type="PDB" id="6WDM">
    <property type="method" value="EM"/>
    <property type="resolution" value="3.60 A"/>
    <property type="chains" value="z=2-59"/>
</dbReference>
<dbReference type="PDB" id="6WNT">
    <property type="method" value="EM"/>
    <property type="resolution" value="3.10 A"/>
    <property type="chains" value="z=2-59"/>
</dbReference>
<dbReference type="PDB" id="6WNV">
    <property type="method" value="EM"/>
    <property type="resolution" value="3.50 A"/>
    <property type="chains" value="z=2-59"/>
</dbReference>
<dbReference type="PDB" id="6WNW">
    <property type="method" value="EM"/>
    <property type="resolution" value="3.20 A"/>
    <property type="chains" value="z=2-59"/>
</dbReference>
<dbReference type="PDB" id="6X6T">
    <property type="method" value="EM"/>
    <property type="resolution" value="3.20 A"/>
    <property type="chains" value="f=1-59"/>
</dbReference>
<dbReference type="PDB" id="6X7F">
    <property type="method" value="EM"/>
    <property type="resolution" value="3.50 A"/>
    <property type="chains" value="f=1-59"/>
</dbReference>
<dbReference type="PDB" id="6X7K">
    <property type="method" value="EM"/>
    <property type="resolution" value="3.10 A"/>
    <property type="chains" value="f=1-59"/>
</dbReference>
<dbReference type="PDB" id="6X9Q">
    <property type="method" value="EM"/>
    <property type="resolution" value="4.80 A"/>
    <property type="chains" value="f=1-59"/>
</dbReference>
<dbReference type="PDB" id="6XDQ">
    <property type="method" value="EM"/>
    <property type="resolution" value="3.70 A"/>
    <property type="chains" value="f=1-59"/>
</dbReference>
<dbReference type="PDB" id="6XDR">
    <property type="method" value="EM"/>
    <property type="resolution" value="4.70 A"/>
    <property type="chains" value="f=1-59"/>
</dbReference>
<dbReference type="PDB" id="6XGF">
    <property type="method" value="EM"/>
    <property type="resolution" value="5.00 A"/>
    <property type="chains" value="f=1-59"/>
</dbReference>
<dbReference type="PDB" id="6XII">
    <property type="method" value="EM"/>
    <property type="resolution" value="7.00 A"/>
    <property type="chains" value="f=1-59"/>
</dbReference>
<dbReference type="PDB" id="6XIJ">
    <property type="method" value="EM"/>
    <property type="resolution" value="8.00 A"/>
    <property type="chains" value="f=1-59"/>
</dbReference>
<dbReference type="PDB" id="6XZ7">
    <property type="method" value="EM"/>
    <property type="resolution" value="2.10 A"/>
    <property type="chains" value="Z=2-59"/>
</dbReference>
<dbReference type="PDB" id="6XZA">
    <property type="method" value="EM"/>
    <property type="resolution" value="2.66 A"/>
    <property type="chains" value="Z2=2-59"/>
</dbReference>
<dbReference type="PDB" id="6XZB">
    <property type="method" value="EM"/>
    <property type="resolution" value="2.54 A"/>
    <property type="chains" value="Z2=2-59"/>
</dbReference>
<dbReference type="PDB" id="6Y69">
    <property type="method" value="EM"/>
    <property type="resolution" value="2.86 A"/>
    <property type="chains" value="Z=2-59"/>
</dbReference>
<dbReference type="PDB" id="6YS3">
    <property type="method" value="EM"/>
    <property type="resolution" value="2.58 A"/>
    <property type="chains" value="2=1-59"/>
</dbReference>
<dbReference type="PDB" id="6YSR">
    <property type="method" value="EM"/>
    <property type="resolution" value="3.10 A"/>
    <property type="chains" value="Z=1-59"/>
</dbReference>
<dbReference type="PDB" id="6YSS">
    <property type="method" value="EM"/>
    <property type="resolution" value="2.60 A"/>
    <property type="chains" value="Z=1-59"/>
</dbReference>
<dbReference type="PDB" id="6YST">
    <property type="method" value="EM"/>
    <property type="resolution" value="3.20 A"/>
    <property type="chains" value="Z=1-59"/>
</dbReference>
<dbReference type="PDB" id="6YSU">
    <property type="method" value="EM"/>
    <property type="resolution" value="3.70 A"/>
    <property type="chains" value="Z=1-59"/>
</dbReference>
<dbReference type="PDB" id="6ZTJ">
    <property type="method" value="EM"/>
    <property type="resolution" value="3.40 A"/>
    <property type="chains" value="B1=1-59"/>
</dbReference>
<dbReference type="PDB" id="6ZTL">
    <property type="method" value="EM"/>
    <property type="resolution" value="3.50 A"/>
    <property type="chains" value="B1=1-59"/>
</dbReference>
<dbReference type="PDB" id="6ZTM">
    <property type="method" value="EM"/>
    <property type="resolution" value="3.30 A"/>
    <property type="chains" value="B1=1-59"/>
</dbReference>
<dbReference type="PDB" id="6ZTN">
    <property type="method" value="EM"/>
    <property type="resolution" value="3.90 A"/>
    <property type="chains" value="B1=1-59"/>
</dbReference>
<dbReference type="PDB" id="6ZTO">
    <property type="method" value="EM"/>
    <property type="resolution" value="3.00 A"/>
    <property type="chains" value="B1=1-59"/>
</dbReference>
<dbReference type="PDB" id="6ZTP">
    <property type="method" value="EM"/>
    <property type="resolution" value="3.00 A"/>
    <property type="chains" value="B1=1-59"/>
</dbReference>
<dbReference type="PDB" id="6ZU1">
    <property type="method" value="EM"/>
    <property type="resolution" value="3.00 A"/>
    <property type="chains" value="B1=1-59"/>
</dbReference>
<dbReference type="PDB" id="7ABZ">
    <property type="method" value="EM"/>
    <property type="resolution" value="3.21 A"/>
    <property type="chains" value="Z=2-59"/>
</dbReference>
<dbReference type="PDB" id="7AC7">
    <property type="method" value="EM"/>
    <property type="resolution" value="3.08 A"/>
    <property type="chains" value="Z=4-59"/>
</dbReference>
<dbReference type="PDB" id="7ACJ">
    <property type="method" value="EM"/>
    <property type="resolution" value="3.20 A"/>
    <property type="chains" value="Z=2-59"/>
</dbReference>
<dbReference type="PDB" id="7ACR">
    <property type="method" value="EM"/>
    <property type="resolution" value="3.44 A"/>
    <property type="chains" value="Z=2-59"/>
</dbReference>
<dbReference type="PDB" id="7B5K">
    <property type="method" value="EM"/>
    <property type="resolution" value="2.90 A"/>
    <property type="chains" value="Z=2-59"/>
</dbReference>
<dbReference type="PDB" id="7BL2">
    <property type="method" value="EM"/>
    <property type="resolution" value="3.70 A"/>
    <property type="chains" value="Z=1-59"/>
</dbReference>
<dbReference type="PDB" id="7BL3">
    <property type="method" value="EM"/>
    <property type="resolution" value="3.50 A"/>
    <property type="chains" value="Z=1-59"/>
</dbReference>
<dbReference type="PDB" id="7BL4">
    <property type="method" value="EM"/>
    <property type="resolution" value="2.40 A"/>
    <property type="chains" value="Z=1-59"/>
</dbReference>
<dbReference type="PDB" id="7BL5">
    <property type="method" value="EM"/>
    <property type="resolution" value="3.30 A"/>
    <property type="chains" value="Z=1-59"/>
</dbReference>
<dbReference type="PDB" id="7BL6">
    <property type="method" value="EM"/>
    <property type="resolution" value="4.00 A"/>
    <property type="chains" value="Z=1-59"/>
</dbReference>
<dbReference type="PDB" id="7BV8">
    <property type="method" value="EM"/>
    <property type="resolution" value="3.14 A"/>
    <property type="chains" value="a=1-59"/>
</dbReference>
<dbReference type="PDB" id="7D6Z">
    <property type="method" value="EM"/>
    <property type="resolution" value="3.40 A"/>
    <property type="chains" value="T=1-59"/>
</dbReference>
<dbReference type="PDB" id="7D80">
    <property type="method" value="EM"/>
    <property type="resolution" value="4.10 A"/>
    <property type="chains" value="x=1-59"/>
</dbReference>
<dbReference type="PDB" id="7JSS">
    <property type="method" value="EM"/>
    <property type="resolution" value="3.70 A"/>
    <property type="chains" value="z=2-59"/>
</dbReference>
<dbReference type="PDB" id="7JSW">
    <property type="method" value="EM"/>
    <property type="resolution" value="3.80 A"/>
    <property type="chains" value="z=2-59"/>
</dbReference>
<dbReference type="PDB" id="7JSZ">
    <property type="method" value="EM"/>
    <property type="resolution" value="3.70 A"/>
    <property type="chains" value="z=2-59"/>
</dbReference>
<dbReference type="PDB" id="7JT1">
    <property type="method" value="EM"/>
    <property type="resolution" value="3.30 A"/>
    <property type="chains" value="z=2-59"/>
</dbReference>
<dbReference type="PDB" id="7JT2">
    <property type="method" value="EM"/>
    <property type="resolution" value="3.50 A"/>
    <property type="chains" value="z=2-59"/>
</dbReference>
<dbReference type="PDB" id="7JT3">
    <property type="method" value="EM"/>
    <property type="resolution" value="3.70 A"/>
    <property type="chains" value="z=2-59"/>
</dbReference>
<dbReference type="PDB" id="7K00">
    <property type="method" value="EM"/>
    <property type="resolution" value="1.98 A"/>
    <property type="chains" value="y=1-59"/>
</dbReference>
<dbReference type="PDB" id="7K50">
    <property type="method" value="EM"/>
    <property type="resolution" value="3.40 A"/>
    <property type="chains" value="z=2-59"/>
</dbReference>
<dbReference type="PDB" id="7K51">
    <property type="method" value="EM"/>
    <property type="resolution" value="3.50 A"/>
    <property type="chains" value="z=2-59"/>
</dbReference>
<dbReference type="PDB" id="7K52">
    <property type="method" value="EM"/>
    <property type="resolution" value="3.40 A"/>
    <property type="chains" value="z=2-59"/>
</dbReference>
<dbReference type="PDB" id="7K53">
    <property type="method" value="EM"/>
    <property type="resolution" value="3.20 A"/>
    <property type="chains" value="z=2-59"/>
</dbReference>
<dbReference type="PDB" id="7K54">
    <property type="method" value="EM"/>
    <property type="resolution" value="3.20 A"/>
    <property type="chains" value="z=2-59"/>
</dbReference>
<dbReference type="PDB" id="7K55">
    <property type="method" value="EM"/>
    <property type="resolution" value="3.30 A"/>
    <property type="chains" value="z=2-59"/>
</dbReference>
<dbReference type="PDB" id="7LV0">
    <property type="method" value="EM"/>
    <property type="resolution" value="3.20 A"/>
    <property type="chains" value="z=2-59"/>
</dbReference>
<dbReference type="PDB" id="7LVK">
    <property type="method" value="EM"/>
    <property type="resolution" value="2.20 A"/>
    <property type="chains" value="h=1-59"/>
</dbReference>
<dbReference type="PDB" id="7M5D">
    <property type="method" value="EM"/>
    <property type="resolution" value="2.80 A"/>
    <property type="chains" value="Z=2-59"/>
</dbReference>
<dbReference type="PDB" id="7N1P">
    <property type="method" value="EM"/>
    <property type="resolution" value="2.33 A"/>
    <property type="chains" value="Ld=1-59"/>
</dbReference>
<dbReference type="PDB" id="7N2C">
    <property type="method" value="EM"/>
    <property type="resolution" value="2.72 A"/>
    <property type="chains" value="Ld=1-59"/>
</dbReference>
<dbReference type="PDB" id="7N2U">
    <property type="method" value="EM"/>
    <property type="resolution" value="2.53 A"/>
    <property type="chains" value="Ld=1-59"/>
</dbReference>
<dbReference type="PDB" id="7N2V">
    <property type="method" value="EM"/>
    <property type="resolution" value="2.54 A"/>
    <property type="chains" value="Ld=1-59"/>
</dbReference>
<dbReference type="PDB" id="7N30">
    <property type="method" value="EM"/>
    <property type="resolution" value="2.66 A"/>
    <property type="chains" value="Ld=1-59"/>
</dbReference>
<dbReference type="PDB" id="7N31">
    <property type="method" value="EM"/>
    <property type="resolution" value="2.69 A"/>
    <property type="chains" value="Ld=1-59"/>
</dbReference>
<dbReference type="PDB" id="7NBU">
    <property type="method" value="EM"/>
    <property type="resolution" value="3.11 A"/>
    <property type="chains" value="y=2-59"/>
</dbReference>
<dbReference type="PDB" id="7NWT">
    <property type="method" value="EM"/>
    <property type="resolution" value="2.66 A"/>
    <property type="chains" value="Z=1-59"/>
</dbReference>
<dbReference type="PDB" id="7O19">
    <property type="method" value="EM"/>
    <property type="resolution" value="2.90 A"/>
    <property type="chains" value="BZ=1-59"/>
</dbReference>
<dbReference type="PDB" id="7O1A">
    <property type="method" value="EM"/>
    <property type="resolution" value="2.40 A"/>
    <property type="chains" value="BZ=1-59"/>
</dbReference>
<dbReference type="PDB" id="7O1C">
    <property type="method" value="EM"/>
    <property type="resolution" value="2.60 A"/>
    <property type="chains" value="BZ=1-59"/>
</dbReference>
<dbReference type="PDB" id="7OIZ">
    <property type="method" value="EM"/>
    <property type="resolution" value="2.90 A"/>
    <property type="chains" value="y=1-59"/>
</dbReference>
<dbReference type="PDB" id="7OJ0">
    <property type="method" value="EM"/>
    <property type="resolution" value="3.50 A"/>
    <property type="chains" value="y=1-59"/>
</dbReference>
<dbReference type="PDB" id="7P3K">
    <property type="method" value="EM"/>
    <property type="resolution" value="2.90 A"/>
    <property type="chains" value="y=1-59"/>
</dbReference>
<dbReference type="PDB" id="7PJS">
    <property type="method" value="EM"/>
    <property type="resolution" value="2.35 A"/>
    <property type="chains" value="Z=1-59"/>
</dbReference>
<dbReference type="PDB" id="7PJT">
    <property type="method" value="EM"/>
    <property type="resolution" value="6.00 A"/>
    <property type="chains" value="Z=1-59"/>
</dbReference>
<dbReference type="PDB" id="7PJU">
    <property type="method" value="EM"/>
    <property type="resolution" value="9.50 A"/>
    <property type="chains" value="Z=1-59"/>
</dbReference>
<dbReference type="PDB" id="7PJV">
    <property type="method" value="EM"/>
    <property type="resolution" value="3.10 A"/>
    <property type="chains" value="Z=1-59"/>
</dbReference>
<dbReference type="PDB" id="7PJW">
    <property type="method" value="EM"/>
    <property type="resolution" value="4.00 A"/>
    <property type="chains" value="Z=1-59"/>
</dbReference>
<dbReference type="PDB" id="7PJX">
    <property type="method" value="EM"/>
    <property type="resolution" value="6.50 A"/>
    <property type="chains" value="Z=1-59"/>
</dbReference>
<dbReference type="PDB" id="7PJY">
    <property type="method" value="EM"/>
    <property type="resolution" value="3.10 A"/>
    <property type="chains" value="Z=1-59"/>
</dbReference>
<dbReference type="PDB" id="7PJZ">
    <property type="method" value="EM"/>
    <property type="resolution" value="6.00 A"/>
    <property type="chains" value="Z=1-59"/>
</dbReference>
<dbReference type="PDB" id="7Q4K">
    <property type="method" value="EM"/>
    <property type="resolution" value="3.00 A"/>
    <property type="chains" value="BZ=1-59"/>
</dbReference>
<dbReference type="PDB" id="7QG8">
    <property type="method" value="EM"/>
    <property type="resolution" value="3.97 A"/>
    <property type="chains" value="m=1-59"/>
</dbReference>
<dbReference type="PDB" id="7QGH">
    <property type="method" value="EM"/>
    <property type="resolution" value="4.48 A"/>
    <property type="chains" value="m=1-59"/>
</dbReference>
<dbReference type="PDB" id="7QGN">
    <property type="method" value="EM"/>
    <property type="resolution" value="3.37 A"/>
    <property type="chains" value="m=1-59"/>
</dbReference>
<dbReference type="PDB" id="7QGR">
    <property type="method" value="EM"/>
    <property type="resolution" value="5.70 A"/>
    <property type="chains" value="m=1-59"/>
</dbReference>
<dbReference type="PDB" id="7QQ3">
    <property type="method" value="EM"/>
    <property type="resolution" value="2.10 A"/>
    <property type="chains" value="h=1-59"/>
</dbReference>
<dbReference type="PDB" id="7S1G">
    <property type="method" value="EM"/>
    <property type="resolution" value="2.48 A"/>
    <property type="chains" value="h=1-59"/>
</dbReference>
<dbReference type="PDB" id="7S1H">
    <property type="method" value="EM"/>
    <property type="resolution" value="2.35 A"/>
    <property type="chains" value="h=1-59"/>
</dbReference>
<dbReference type="PDB" id="7S1I">
    <property type="method" value="EM"/>
    <property type="resolution" value="2.48 A"/>
    <property type="chains" value="h=1-59"/>
</dbReference>
<dbReference type="PDB" id="7S1J">
    <property type="method" value="EM"/>
    <property type="resolution" value="2.47 A"/>
    <property type="chains" value="h=1-59"/>
</dbReference>
<dbReference type="PDB" id="7S1K">
    <property type="method" value="EM"/>
    <property type="resolution" value="2.42 A"/>
    <property type="chains" value="h=1-59"/>
</dbReference>
<dbReference type="PDB" id="7SA4">
    <property type="method" value="EM"/>
    <property type="resolution" value="2.55 A"/>
    <property type="chains" value="Z=1-59"/>
</dbReference>
<dbReference type="PDB" id="7SS9">
    <property type="method" value="EM"/>
    <property type="resolution" value="3.90 A"/>
    <property type="chains" value="z=2-59"/>
</dbReference>
<dbReference type="PDB" id="7SSD">
    <property type="method" value="EM"/>
    <property type="resolution" value="3.30 A"/>
    <property type="chains" value="z=2-59"/>
</dbReference>
<dbReference type="PDB" id="7SSL">
    <property type="method" value="EM"/>
    <property type="resolution" value="3.80 A"/>
    <property type="chains" value="z=2-59"/>
</dbReference>
<dbReference type="PDB" id="7SSN">
    <property type="method" value="EM"/>
    <property type="resolution" value="3.20 A"/>
    <property type="chains" value="z=2-59"/>
</dbReference>
<dbReference type="PDB" id="7SSO">
    <property type="method" value="EM"/>
    <property type="resolution" value="3.20 A"/>
    <property type="chains" value="z=2-59"/>
</dbReference>
<dbReference type="PDB" id="7SSW">
    <property type="method" value="EM"/>
    <property type="resolution" value="3.80 A"/>
    <property type="chains" value="z=2-59"/>
</dbReference>
<dbReference type="PDB" id="7ST2">
    <property type="method" value="EM"/>
    <property type="resolution" value="2.90 A"/>
    <property type="chains" value="z=2-59"/>
</dbReference>
<dbReference type="PDB" id="7ST6">
    <property type="method" value="EM"/>
    <property type="resolution" value="3.00 A"/>
    <property type="chains" value="z=2-59"/>
</dbReference>
<dbReference type="PDB" id="7ST7">
    <property type="method" value="EM"/>
    <property type="resolution" value="3.20 A"/>
    <property type="chains" value="z=2-59"/>
</dbReference>
<dbReference type="PDB" id="7TOS">
    <property type="method" value="EM"/>
    <property type="resolution" value="2.90 A"/>
    <property type="chains" value="L30=2-59"/>
</dbReference>
<dbReference type="PDB" id="7UG7">
    <property type="method" value="EM"/>
    <property type="resolution" value="2.58 A"/>
    <property type="chains" value="Ld=1-59"/>
</dbReference>
<dbReference type="PDB" id="7UPH">
    <property type="method" value="EM"/>
    <property type="resolution" value="4.18 A"/>
    <property type="chains" value="y=2-59"/>
</dbReference>
<dbReference type="PDB" id="7Y7C">
    <property type="method" value="EM"/>
    <property type="resolution" value="2.51 A"/>
    <property type="chains" value="y=1-59"/>
</dbReference>
<dbReference type="PDB" id="7Y7D">
    <property type="method" value="EM"/>
    <property type="resolution" value="2.58 A"/>
    <property type="chains" value="y=1-59"/>
</dbReference>
<dbReference type="PDB" id="7Y7E">
    <property type="method" value="EM"/>
    <property type="resolution" value="2.41 A"/>
    <property type="chains" value="y=1-59"/>
</dbReference>
<dbReference type="PDB" id="7Y7F">
    <property type="method" value="EM"/>
    <property type="resolution" value="2.43 A"/>
    <property type="chains" value="y=1-59"/>
</dbReference>
<dbReference type="PDB" id="7Y7G">
    <property type="method" value="EM"/>
    <property type="resolution" value="2.34 A"/>
    <property type="chains" value="y=1-59"/>
</dbReference>
<dbReference type="PDB" id="7Y7H">
    <property type="method" value="EM"/>
    <property type="resolution" value="2.51 A"/>
    <property type="chains" value="y=1-59"/>
</dbReference>
<dbReference type="PDB" id="7YLA">
    <property type="method" value="EM"/>
    <property type="resolution" value="2.52 A"/>
    <property type="chains" value="h=2-59"/>
</dbReference>
<dbReference type="PDB" id="7Z20">
    <property type="method" value="EM"/>
    <property type="resolution" value="2.29 A"/>
    <property type="chains" value="2=1-59"/>
</dbReference>
<dbReference type="PDB" id="7ZOD">
    <property type="method" value="EM"/>
    <property type="resolution" value="2.56 A"/>
    <property type="chains" value="2=1-59"/>
</dbReference>
<dbReference type="PDB" id="7ZP8">
    <property type="method" value="EM"/>
    <property type="resolution" value="2.20 A"/>
    <property type="chains" value="2=1-59"/>
</dbReference>
<dbReference type="PDB" id="7ZQ5">
    <property type="method" value="EM"/>
    <property type="resolution" value="2.70 A"/>
    <property type="chains" value="2=1-59"/>
</dbReference>
<dbReference type="PDB" id="7ZQ6">
    <property type="method" value="EM"/>
    <property type="resolution" value="2.75 A"/>
    <property type="chains" value="2=1-59"/>
</dbReference>
<dbReference type="PDB" id="7ZTA">
    <property type="method" value="EM"/>
    <property type="resolution" value="2.70 A"/>
    <property type="chains" value="L301=2-59"/>
</dbReference>
<dbReference type="PDB" id="8A3L">
    <property type="method" value="EM"/>
    <property type="resolution" value="3.42 A"/>
    <property type="chains" value="y=1-59"/>
</dbReference>
<dbReference type="PDB" id="8AKN">
    <property type="method" value="EM"/>
    <property type="resolution" value="2.30 A"/>
    <property type="chains" value="y=1-59"/>
</dbReference>
<dbReference type="PDB" id="8AM9">
    <property type="method" value="EM"/>
    <property type="resolution" value="2.80 A"/>
    <property type="chains" value="y=1-59"/>
</dbReference>
<dbReference type="PDB" id="8ANA">
    <property type="method" value="EM"/>
    <property type="resolution" value="2.10 A"/>
    <property type="chains" value="y=1-59"/>
</dbReference>
<dbReference type="PDB" id="8AP4">
    <property type="method" value="EM"/>
    <property type="resolution" value="3.00 A"/>
    <property type="chains" value="y=1-59"/>
</dbReference>
<dbReference type="PDB" id="8AYE">
    <property type="method" value="EM"/>
    <property type="resolution" value="1.96 A"/>
    <property type="chains" value="y=1-59"/>
</dbReference>
<dbReference type="PDB" id="8B0X">
    <property type="method" value="EM"/>
    <property type="resolution" value="1.55 A"/>
    <property type="chains" value="y=1-59"/>
</dbReference>
<dbReference type="PDB" id="8B7Y">
    <property type="method" value="EM"/>
    <property type="resolution" value="3.00 A"/>
    <property type="chains" value="h=1-59"/>
</dbReference>
<dbReference type="PDB" id="8BF7">
    <property type="method" value="EM"/>
    <property type="resolution" value="2.33 A"/>
    <property type="chains" value="W=1-59"/>
</dbReference>
<dbReference type="PDB" id="8BGE">
    <property type="method" value="EM"/>
    <property type="resolution" value="2.11 A"/>
    <property type="chains" value="W=1-59"/>
</dbReference>
<dbReference type="PDB" id="8BGH">
    <property type="method" value="EM"/>
    <property type="resolution" value="2.88 A"/>
    <property type="chains" value="W=1-59"/>
</dbReference>
<dbReference type="PDB" id="8BH4">
    <property type="method" value="EM"/>
    <property type="resolution" value="2.62 A"/>
    <property type="chains" value="W=1-59"/>
</dbReference>
<dbReference type="PDB" id="8BHJ">
    <property type="method" value="EM"/>
    <property type="resolution" value="2.81 A"/>
    <property type="chains" value="W=1-59"/>
</dbReference>
<dbReference type="PDB" id="8BHL">
    <property type="method" value="EM"/>
    <property type="resolution" value="2.21 A"/>
    <property type="chains" value="W=1-59"/>
</dbReference>
<dbReference type="PDB" id="8BHN">
    <property type="method" value="EM"/>
    <property type="resolution" value="2.85 A"/>
    <property type="chains" value="W=1-59"/>
</dbReference>
<dbReference type="PDB" id="8BHP">
    <property type="method" value="EM"/>
    <property type="resolution" value="2.37 A"/>
    <property type="chains" value="W=1-59"/>
</dbReference>
<dbReference type="PDB" id="8BIL">
    <property type="method" value="EM"/>
    <property type="resolution" value="2.04 A"/>
    <property type="chains" value="W=1-59"/>
</dbReference>
<dbReference type="PDB" id="8BIM">
    <property type="method" value="EM"/>
    <property type="resolution" value="2.04 A"/>
    <property type="chains" value="W=1-59"/>
</dbReference>
<dbReference type="PDB" id="8C8X">
    <property type="method" value="EM"/>
    <property type="resolution" value="3.93 A"/>
    <property type="chains" value="Z=1-59"/>
</dbReference>
<dbReference type="PDB" id="8C8Y">
    <property type="method" value="EM"/>
    <property type="resolution" value="3.03 A"/>
    <property type="chains" value="Z=1-59"/>
</dbReference>
<dbReference type="PDB" id="8C8Z">
    <property type="method" value="EM"/>
    <property type="resolution" value="3.12 A"/>
    <property type="chains" value="Z=1-59"/>
</dbReference>
<dbReference type="PDB" id="8C90">
    <property type="method" value="EM"/>
    <property type="resolution" value="3.15 A"/>
    <property type="chains" value="Z=1-59"/>
</dbReference>
<dbReference type="PDB" id="8C91">
    <property type="method" value="EM"/>
    <property type="resolution" value="4.19 A"/>
    <property type="chains" value="Z=1-59"/>
</dbReference>
<dbReference type="PDB" id="8C92">
    <property type="method" value="EM"/>
    <property type="resolution" value="3.79 A"/>
    <property type="chains" value="Z=1-59"/>
</dbReference>
<dbReference type="PDB" id="8C93">
    <property type="method" value="EM"/>
    <property type="resolution" value="4.17 A"/>
    <property type="chains" value="Z=1-59"/>
</dbReference>
<dbReference type="PDB" id="8C94">
    <property type="method" value="EM"/>
    <property type="resolution" value="3.80 A"/>
    <property type="chains" value="Z=1-59"/>
</dbReference>
<dbReference type="PDB" id="8C95">
    <property type="method" value="EM"/>
    <property type="resolution" value="4.92 A"/>
    <property type="chains" value="Z=1-59"/>
</dbReference>
<dbReference type="PDB" id="8C96">
    <property type="method" value="EM"/>
    <property type="resolution" value="4.43 A"/>
    <property type="chains" value="Z=1-59"/>
</dbReference>
<dbReference type="PDB" id="8C98">
    <property type="method" value="EM"/>
    <property type="resolution" value="3.66 A"/>
    <property type="chains" value="Z=1-59"/>
</dbReference>
<dbReference type="PDB" id="8C99">
    <property type="method" value="EM"/>
    <property type="resolution" value="3.29 A"/>
    <property type="chains" value="Z=1-59"/>
</dbReference>
<dbReference type="PDB" id="8CAM">
    <property type="method" value="EM"/>
    <property type="resolution" value="1.86 A"/>
    <property type="chains" value="y=1-59"/>
</dbReference>
<dbReference type="PDB" id="8CEU">
    <property type="method" value="EM"/>
    <property type="resolution" value="1.83 A"/>
    <property type="chains" value="y=1-59"/>
</dbReference>
<dbReference type="PDB" id="8CGD">
    <property type="method" value="EM"/>
    <property type="resolution" value="1.98 A"/>
    <property type="chains" value="y=1-59"/>
</dbReference>
<dbReference type="PDB" id="8CGK">
    <property type="method" value="EM"/>
    <property type="resolution" value="1.64 A"/>
    <property type="chains" value="y=1-59"/>
</dbReference>
<dbReference type="PDB" id="8CGV">
    <property type="method" value="EM"/>
    <property type="resolution" value="1.66 A"/>
    <property type="chains" value="y=1-59"/>
</dbReference>
<dbReference type="PDB" id="8EIU">
    <property type="method" value="EM"/>
    <property type="resolution" value="2.24 A"/>
    <property type="chains" value="y=1-59"/>
</dbReference>
<dbReference type="PDB" id="8EKC">
    <property type="method" value="EM"/>
    <property type="resolution" value="2.70 A"/>
    <property type="chains" value="2=1-59"/>
</dbReference>
<dbReference type="PDB" id="8EMM">
    <property type="method" value="EM"/>
    <property type="resolution" value="2.10 A"/>
    <property type="chains" value="y=1-59"/>
</dbReference>
<dbReference type="PDB" id="8FIZ">
    <property type="method" value="EM"/>
    <property type="resolution" value="3.80 A"/>
    <property type="chains" value="BQ=1-59"/>
</dbReference>
<dbReference type="PDB" id="8FTO">
    <property type="method" value="EM"/>
    <property type="resolution" value="1.85 A"/>
    <property type="chains" value="y=1-59"/>
</dbReference>
<dbReference type="PDB" id="8FZD">
    <property type="method" value="EM"/>
    <property type="resolution" value="3.10 A"/>
    <property type="chains" value="2=1-59"/>
</dbReference>
<dbReference type="PDB" id="8FZE">
    <property type="method" value="EM"/>
    <property type="resolution" value="3.00 A"/>
    <property type="chains" value="2=1-59"/>
</dbReference>
<dbReference type="PDB" id="8FZF">
    <property type="method" value="EM"/>
    <property type="resolution" value="3.20 A"/>
    <property type="chains" value="2=1-59"/>
</dbReference>
<dbReference type="PDB" id="8FZG">
    <property type="method" value="EM"/>
    <property type="resolution" value="3.10 A"/>
    <property type="chains" value="2=1-59"/>
</dbReference>
<dbReference type="PDB" id="8FZH">
    <property type="method" value="EM"/>
    <property type="resolution" value="2.90 A"/>
    <property type="chains" value="2=1-59"/>
</dbReference>
<dbReference type="PDB" id="8FZI">
    <property type="method" value="EM"/>
    <property type="resolution" value="3.10 A"/>
    <property type="chains" value="2=1-59"/>
</dbReference>
<dbReference type="PDB" id="8FZJ">
    <property type="method" value="EM"/>
    <property type="resolution" value="3.00 A"/>
    <property type="chains" value="2=1-59"/>
</dbReference>
<dbReference type="PDB" id="8G2U">
    <property type="method" value="EM"/>
    <property type="resolution" value="3.00 A"/>
    <property type="chains" value="Z=2-59"/>
</dbReference>
<dbReference type="PDB" id="8G31">
    <property type="method" value="EM"/>
    <property type="resolution" value="3.20 A"/>
    <property type="chains" value="Z=2-59"/>
</dbReference>
<dbReference type="PDB" id="8G34">
    <property type="method" value="EM"/>
    <property type="resolution" value="3.20 A"/>
    <property type="chains" value="Z=2-59"/>
</dbReference>
<dbReference type="PDB" id="8G38">
    <property type="method" value="EM"/>
    <property type="resolution" value="3.20 A"/>
    <property type="chains" value="Z=2-59"/>
</dbReference>
<dbReference type="PDB" id="8G6W">
    <property type="method" value="EM"/>
    <property type="resolution" value="2.02 A"/>
    <property type="chains" value="y=1-59"/>
</dbReference>
<dbReference type="PDB" id="8G6X">
    <property type="method" value="EM"/>
    <property type="resolution" value="2.31 A"/>
    <property type="chains" value="y=1-59"/>
</dbReference>
<dbReference type="PDB" id="8G6Y">
    <property type="method" value="EM"/>
    <property type="resolution" value="2.09 A"/>
    <property type="chains" value="y=1-59"/>
</dbReference>
<dbReference type="PDB" id="8G7P">
    <property type="method" value="EM"/>
    <property type="resolution" value="2.90 A"/>
    <property type="chains" value="2=1-59"/>
</dbReference>
<dbReference type="PDB" id="8G7Q">
    <property type="method" value="EM"/>
    <property type="resolution" value="3.10 A"/>
    <property type="chains" value="2=1-59"/>
</dbReference>
<dbReference type="PDB" id="8G7R">
    <property type="method" value="EM"/>
    <property type="resolution" value="2.80 A"/>
    <property type="chains" value="2=1-59"/>
</dbReference>
<dbReference type="PDB" id="8G7S">
    <property type="method" value="EM"/>
    <property type="resolution" value="3.10 A"/>
    <property type="chains" value="2=1-59"/>
</dbReference>
<dbReference type="PDB" id="8HSP">
    <property type="method" value="EM"/>
    <property type="resolution" value="2.32 A"/>
    <property type="chains" value="y=1-59"/>
</dbReference>
<dbReference type="PDB" id="8HTZ">
    <property type="method" value="EM"/>
    <property type="resolution" value="2.40 A"/>
    <property type="chains" value="y=1-59"/>
</dbReference>
<dbReference type="PDB" id="8HU1">
    <property type="method" value="EM"/>
    <property type="resolution" value="2.69 A"/>
    <property type="chains" value="y=1-59"/>
</dbReference>
<dbReference type="PDB" id="8IFB">
    <property type="method" value="EM"/>
    <property type="resolution" value="2.43 A"/>
    <property type="chains" value="y=1-59"/>
</dbReference>
<dbReference type="PDB" id="8IFC">
    <property type="method" value="EM"/>
    <property type="resolution" value="2.90 A"/>
    <property type="chains" value="y=1-59"/>
</dbReference>
<dbReference type="PDB" id="8J1Z">
    <property type="method" value="EM"/>
    <property type="resolution" value="2.60 A"/>
    <property type="chains" value="y=1-59"/>
</dbReference>
<dbReference type="PDB" id="8P16">
    <property type="method" value="EM"/>
    <property type="resolution" value="2.77 A"/>
    <property type="chains" value="Z=1-59"/>
</dbReference>
<dbReference type="PDB" id="8P17">
    <property type="method" value="EM"/>
    <property type="resolution" value="2.78 A"/>
    <property type="chains" value="Z=1-59"/>
</dbReference>
<dbReference type="PDB" id="8P18">
    <property type="method" value="EM"/>
    <property type="resolution" value="2.77 A"/>
    <property type="chains" value="Z=1-59"/>
</dbReference>
<dbReference type="PDB" id="8PEG">
    <property type="method" value="EM"/>
    <property type="resolution" value="3.30 A"/>
    <property type="chains" value="3=1-59"/>
</dbReference>
<dbReference type="PDB" id="8PHJ">
    <property type="method" value="EM"/>
    <property type="resolution" value="3.67 A"/>
    <property type="chains" value="y=1-59"/>
</dbReference>
<dbReference type="PDB" id="8PKL">
    <property type="method" value="EM"/>
    <property type="resolution" value="3.09 A"/>
    <property type="chains" value="3=1-59"/>
</dbReference>
<dbReference type="PDB" id="8PVA">
    <property type="method" value="EM"/>
    <property type="resolution" value="4.50 A"/>
    <property type="chains" value="y=1-59"/>
</dbReference>
<dbReference type="PDB" id="8Q4F">
    <property type="method" value="EM"/>
    <property type="resolution" value="3.10 A"/>
    <property type="chains" value="y=1-59"/>
</dbReference>
<dbReference type="PDB" id="8QBT">
    <property type="method" value="EM"/>
    <property type="resolution" value="2.20 A"/>
    <property type="chains" value="Z=1-59"/>
</dbReference>
<dbReference type="PDB" id="8QK7">
    <property type="method" value="EM"/>
    <property type="resolution" value="2.77 A"/>
    <property type="chains" value="Z=1-59"/>
</dbReference>
<dbReference type="PDB" id="8QOA">
    <property type="method" value="EM"/>
    <property type="resolution" value="2.00 A"/>
    <property type="chains" value="y=1-59"/>
</dbReference>
<dbReference type="PDB" id="8R3V">
    <property type="method" value="EM"/>
    <property type="resolution" value="3.28 A"/>
    <property type="chains" value="32=1-59"/>
</dbReference>
<dbReference type="PDB" id="8R6C">
    <property type="method" value="EM"/>
    <property type="resolution" value="2.20 A"/>
    <property type="chains" value="y=1-59"/>
</dbReference>
<dbReference type="PDB" id="8R8M">
    <property type="method" value="EM"/>
    <property type="resolution" value="2.40 A"/>
    <property type="chains" value="y=1-59"/>
</dbReference>
<dbReference type="PDB" id="8RCL">
    <property type="method" value="EM"/>
    <property type="resolution" value="3.49 A"/>
    <property type="chains" value="32=1-59"/>
</dbReference>
<dbReference type="PDB" id="8RCM">
    <property type="method" value="EM"/>
    <property type="resolution" value="3.59 A"/>
    <property type="chains" value="32=1-59"/>
</dbReference>
<dbReference type="PDB" id="8RCS">
    <property type="method" value="EM"/>
    <property type="resolution" value="4.46 A"/>
    <property type="chains" value="32=1-59"/>
</dbReference>
<dbReference type="PDB" id="8RCT">
    <property type="method" value="EM"/>
    <property type="resolution" value="5.32 A"/>
    <property type="chains" value="32=1-59"/>
</dbReference>
<dbReference type="PDB" id="8RPY">
    <property type="method" value="EM"/>
    <property type="resolution" value="2.64 A"/>
    <property type="chains" value="Z=2-59"/>
</dbReference>
<dbReference type="PDB" id="8RPZ">
    <property type="method" value="EM"/>
    <property type="resolution" value="2.44 A"/>
    <property type="chains" value="Z=2-59"/>
</dbReference>
<dbReference type="PDB" id="8RQ0">
    <property type="method" value="EM"/>
    <property type="resolution" value="2.44 A"/>
    <property type="chains" value="Z=2-59"/>
</dbReference>
<dbReference type="PDB" id="8RQ2">
    <property type="method" value="EM"/>
    <property type="resolution" value="2.44 A"/>
    <property type="chains" value="Z=2-59"/>
</dbReference>
<dbReference type="PDB" id="8SYL">
    <property type="method" value="EM"/>
    <property type="resolution" value="2.90 A"/>
    <property type="chains" value="2=1-59"/>
</dbReference>
<dbReference type="PDB" id="8T5D">
    <property type="method" value="EM"/>
    <property type="resolution" value="3.20 A"/>
    <property type="chains" value="Z=2-59"/>
</dbReference>
<dbReference type="PDB" id="8T5H">
    <property type="method" value="EM"/>
    <property type="resolution" value="3.30 A"/>
    <property type="chains" value="Z=2-59"/>
</dbReference>
<dbReference type="PDB" id="8VS9">
    <property type="method" value="EM"/>
    <property type="resolution" value="3.90 A"/>
    <property type="chains" value="L30=1-59"/>
</dbReference>
<dbReference type="PDB" id="8VSA">
    <property type="method" value="EM"/>
    <property type="resolution" value="3.70 A"/>
    <property type="chains" value="L30=1-59"/>
</dbReference>
<dbReference type="PDB" id="8W51">
    <property type="method" value="EM"/>
    <property type="resolution" value="2.40 A"/>
    <property type="chains" value="0=1-59"/>
</dbReference>
<dbReference type="PDB" id="8YUO">
    <property type="method" value="EM"/>
    <property type="resolution" value="2.25 A"/>
    <property type="chains" value="y=1-59"/>
</dbReference>
<dbReference type="PDB" id="8YUP">
    <property type="method" value="EM"/>
    <property type="resolution" value="2.39 A"/>
    <property type="chains" value="y=1-59"/>
</dbReference>
<dbReference type="PDB" id="8YUQ">
    <property type="method" value="EM"/>
    <property type="resolution" value="2.41 A"/>
    <property type="chains" value="y=1-59"/>
</dbReference>
<dbReference type="PDB" id="8YUR">
    <property type="method" value="EM"/>
    <property type="resolution" value="2.47 A"/>
    <property type="chains" value="y=1-59"/>
</dbReference>
<dbReference type="PDB" id="8YUS">
    <property type="method" value="EM"/>
    <property type="resolution" value="2.43 A"/>
    <property type="chains" value="y=1-59"/>
</dbReference>
<dbReference type="PDB" id="9AX8">
    <property type="method" value="EM"/>
    <property type="resolution" value="2.60 A"/>
    <property type="chains" value="3=2-59"/>
</dbReference>
<dbReference type="PDB" id="9D89">
    <property type="method" value="EM"/>
    <property type="resolution" value="1.95 A"/>
    <property type="chains" value="y=2-59"/>
</dbReference>
<dbReference type="PDB" id="9FBV">
    <property type="method" value="EM"/>
    <property type="resolution" value="2.40 A"/>
    <property type="chains" value="y=1-59"/>
</dbReference>
<dbReference type="PDB" id="9GFT">
    <property type="method" value="EM"/>
    <property type="resolution" value="3.10 A"/>
    <property type="chains" value="Au/m=1-59"/>
</dbReference>
<dbReference type="PDB" id="9GGR">
    <property type="method" value="EM"/>
    <property type="resolution" value="3.20 A"/>
    <property type="chains" value="Au/m=1-59"/>
</dbReference>
<dbReference type="PDB" id="9H3L">
    <property type="method" value="EM"/>
    <property type="resolution" value="5.84 A"/>
    <property type="chains" value="Z=2-59"/>
</dbReference>
<dbReference type="PDB" id="9H3N">
    <property type="method" value="EM"/>
    <property type="resolution" value="3.69 A"/>
    <property type="chains" value="Z=2-59"/>
</dbReference>
<dbReference type="PDB" id="9H3O">
    <property type="method" value="EM"/>
    <property type="resolution" value="4.54 A"/>
    <property type="chains" value="Z=2-59"/>
</dbReference>
<dbReference type="PDB" id="9H3P">
    <property type="method" value="EM"/>
    <property type="resolution" value="7.06 A"/>
    <property type="chains" value="Z=2-59"/>
</dbReference>
<dbReference type="PDB" id="9H3Q">
    <property type="method" value="EM"/>
    <property type="resolution" value="4.02 A"/>
    <property type="chains" value="Z=2-59"/>
</dbReference>
<dbReference type="PDB" id="9H3R">
    <property type="method" value="EM"/>
    <property type="resolution" value="4.12 A"/>
    <property type="chains" value="Z=2-59"/>
</dbReference>
<dbReference type="PDB" id="9H3S">
    <property type="method" value="EM"/>
    <property type="resolution" value="4.16 A"/>
    <property type="chains" value="Z=2-59"/>
</dbReference>
<dbReference type="PDB" id="9H3T">
    <property type="method" value="EM"/>
    <property type="resolution" value="3.85 A"/>
    <property type="chains" value="Z=2-59"/>
</dbReference>
<dbReference type="PDB" id="9H3U">
    <property type="method" value="EM"/>
    <property type="resolution" value="3.47 A"/>
    <property type="chains" value="Z=2-59"/>
</dbReference>
<dbReference type="PDB" id="9H3V">
    <property type="method" value="EM"/>
    <property type="resolution" value="3.55 A"/>
    <property type="chains" value="Z=2-59"/>
</dbReference>
<dbReference type="PDB" id="9H3W">
    <property type="method" value="EM"/>
    <property type="resolution" value="5.38 A"/>
    <property type="chains" value="Z=2-59"/>
</dbReference>
<dbReference type="PDB" id="9H3X">
    <property type="method" value="EM"/>
    <property type="resolution" value="4.12 A"/>
    <property type="chains" value="Z=2-59"/>
</dbReference>
<dbReference type="PDB" id="9H3Y">
    <property type="method" value="EM"/>
    <property type="resolution" value="3.09 A"/>
    <property type="chains" value="Z=2-59"/>
</dbReference>
<dbReference type="PDB" id="9H3Z">
    <property type="method" value="EM"/>
    <property type="resolution" value="2.98 A"/>
    <property type="chains" value="Z=2-59"/>
</dbReference>
<dbReference type="PDB" id="9HA3">
    <property type="method" value="EM"/>
    <property type="resolution" value="3.62 A"/>
    <property type="chains" value="Z=2-59"/>
</dbReference>
<dbReference type="PDB" id="9HA4">
    <property type="method" value="EM"/>
    <property type="resolution" value="4.26 A"/>
    <property type="chains" value="Z=2-59"/>
</dbReference>
<dbReference type="PDB" id="9HA5">
    <property type="method" value="EM"/>
    <property type="resolution" value="3.30 A"/>
    <property type="chains" value="Z=2-59"/>
</dbReference>
<dbReference type="PDB" id="9HA6">
    <property type="method" value="EM"/>
    <property type="resolution" value="3.08 A"/>
    <property type="chains" value="Z=2-59"/>
</dbReference>
<dbReference type="PDB" id="9HA7">
    <property type="method" value="EM"/>
    <property type="resolution" value="4.37 A"/>
    <property type="chains" value="Z=2-59"/>
</dbReference>
<dbReference type="PDB" id="9HAI">
    <property type="method" value="EM"/>
    <property type="resolution" value="3.01 A"/>
    <property type="chains" value="Z=2-59"/>
</dbReference>
<dbReference type="PDB" id="9HAM">
    <property type="method" value="EM"/>
    <property type="resolution" value="5.06 A"/>
    <property type="chains" value="Z=2-59"/>
</dbReference>
<dbReference type="PDB" id="9MOR">
    <property type="method" value="EM"/>
    <property type="resolution" value="2.65 A"/>
    <property type="chains" value="Z=1-59"/>
</dbReference>
<dbReference type="PDB" id="9MQ4">
    <property type="method" value="EM"/>
    <property type="resolution" value="2.78 A"/>
    <property type="chains" value="Z=1-59"/>
</dbReference>
<dbReference type="PDBsum" id="1ML5"/>
<dbReference type="PDBsum" id="2J28"/>
<dbReference type="PDBsum" id="2RDO"/>
<dbReference type="PDBsum" id="3BBX"/>
<dbReference type="PDBsum" id="3IY9"/>
<dbReference type="PDBsum" id="3J5L"/>
<dbReference type="PDBsum" id="3J7Z"/>
<dbReference type="PDBsum" id="3J8G"/>
<dbReference type="PDBsum" id="3J9Y"/>
<dbReference type="PDBsum" id="3J9Z"/>
<dbReference type="PDBsum" id="3JA1"/>
<dbReference type="PDBsum" id="3JBU"/>
<dbReference type="PDBsum" id="3JBV"/>
<dbReference type="PDBsum" id="3JCD"/>
<dbReference type="PDBsum" id="3JCE"/>
<dbReference type="PDBsum" id="3JCJ"/>
<dbReference type="PDBsum" id="3JCN"/>
<dbReference type="PDBsum" id="4CSU"/>
<dbReference type="PDBsum" id="4U1U"/>
<dbReference type="PDBsum" id="4U1V"/>
<dbReference type="PDBsum" id="4U20"/>
<dbReference type="PDBsum" id="4U24"/>
<dbReference type="PDBsum" id="4U25"/>
<dbReference type="PDBsum" id="4U26"/>
<dbReference type="PDBsum" id="4U27"/>
<dbReference type="PDBsum" id="4UY8"/>
<dbReference type="PDBsum" id="4V47"/>
<dbReference type="PDBsum" id="4V48"/>
<dbReference type="PDBsum" id="4V4H"/>
<dbReference type="PDBsum" id="4V4Q"/>
<dbReference type="PDBsum" id="4V4V"/>
<dbReference type="PDBsum" id="4V4W"/>
<dbReference type="PDBsum" id="4V50"/>
<dbReference type="PDBsum" id="4V52"/>
<dbReference type="PDBsum" id="4V53"/>
<dbReference type="PDBsum" id="4V54"/>
<dbReference type="PDBsum" id="4V55"/>
<dbReference type="PDBsum" id="4V56"/>
<dbReference type="PDBsum" id="4V57"/>
<dbReference type="PDBsum" id="4V5B"/>
<dbReference type="PDBsum" id="4V5H"/>
<dbReference type="PDBsum" id="4V5Y"/>
<dbReference type="PDBsum" id="4V64"/>
<dbReference type="PDBsum" id="4V65"/>
<dbReference type="PDBsum" id="4V66"/>
<dbReference type="PDBsum" id="4V69"/>
<dbReference type="PDBsum" id="4V6C"/>
<dbReference type="PDBsum" id="4V6D"/>
<dbReference type="PDBsum" id="4V6E"/>
<dbReference type="PDBsum" id="4V6K"/>
<dbReference type="PDBsum" id="4V6L"/>
<dbReference type="PDBsum" id="4V6M"/>
<dbReference type="PDBsum" id="4V6N"/>
<dbReference type="PDBsum" id="4V6O"/>
<dbReference type="PDBsum" id="4V6P"/>
<dbReference type="PDBsum" id="4V6Q"/>
<dbReference type="PDBsum" id="4V6R"/>
<dbReference type="PDBsum" id="4V6S"/>
<dbReference type="PDBsum" id="4V6T"/>
<dbReference type="PDBsum" id="4V6V"/>
<dbReference type="PDBsum" id="4V6Y"/>
<dbReference type="PDBsum" id="4V6Z"/>
<dbReference type="PDBsum" id="4V70"/>
<dbReference type="PDBsum" id="4V71"/>
<dbReference type="PDBsum" id="4V72"/>
<dbReference type="PDBsum" id="4V73"/>
<dbReference type="PDBsum" id="4V74"/>
<dbReference type="PDBsum" id="4V75"/>
<dbReference type="PDBsum" id="4V76"/>
<dbReference type="PDBsum" id="4V77"/>
<dbReference type="PDBsum" id="4V78"/>
<dbReference type="PDBsum" id="4V79"/>
<dbReference type="PDBsum" id="4V7A"/>
<dbReference type="PDBsum" id="4V7B"/>
<dbReference type="PDBsum" id="4V7C"/>
<dbReference type="PDBsum" id="4V7D"/>
<dbReference type="PDBsum" id="4V7I"/>
<dbReference type="PDBsum" id="4V7S"/>
<dbReference type="PDBsum" id="4V7T"/>
<dbReference type="PDBsum" id="4V7U"/>
<dbReference type="PDBsum" id="4V7V"/>
<dbReference type="PDBsum" id="4V85"/>
<dbReference type="PDBsum" id="4V89"/>
<dbReference type="PDBsum" id="4V9C"/>
<dbReference type="PDBsum" id="4V9D"/>
<dbReference type="PDBsum" id="4V9O"/>
<dbReference type="PDBsum" id="4V9P"/>
<dbReference type="PDBsum" id="4WF1"/>
<dbReference type="PDBsum" id="4WOI"/>
<dbReference type="PDBsum" id="4WWW"/>
<dbReference type="PDBsum" id="4YBB"/>
<dbReference type="PDBsum" id="5ADY"/>
<dbReference type="PDBsum" id="5AFI"/>
<dbReference type="PDBsum" id="5AKA"/>
<dbReference type="PDBsum" id="5GAD"/>
<dbReference type="PDBsum" id="5GAE"/>
<dbReference type="PDBsum" id="5GAF"/>
<dbReference type="PDBsum" id="5GAG"/>
<dbReference type="PDBsum" id="5GAH"/>
<dbReference type="PDBsum" id="5H5U"/>
<dbReference type="PDBsum" id="5IQR"/>
<dbReference type="PDBsum" id="5IT8"/>
<dbReference type="PDBsum" id="5J5B"/>
<dbReference type="PDBsum" id="5J7L"/>
<dbReference type="PDBsum" id="5J88"/>
<dbReference type="PDBsum" id="5J8A"/>
<dbReference type="PDBsum" id="5J91"/>
<dbReference type="PDBsum" id="5JC9"/>
<dbReference type="PDBsum" id="5JTE"/>
<dbReference type="PDBsum" id="5JU8"/>
<dbReference type="PDBsum" id="5KCR"/>
<dbReference type="PDBsum" id="5KCS"/>
<dbReference type="PDBsum" id="5KPS"/>
<dbReference type="PDBsum" id="5KPV"/>
<dbReference type="PDBsum" id="5KPW"/>
<dbReference type="PDBsum" id="5KPX"/>
<dbReference type="PDBsum" id="5L3P"/>
<dbReference type="PDBsum" id="5LZA"/>
<dbReference type="PDBsum" id="5LZB"/>
<dbReference type="PDBsum" id="5LZC"/>
<dbReference type="PDBsum" id="5LZD"/>
<dbReference type="PDBsum" id="5LZE"/>
<dbReference type="PDBsum" id="5LZF"/>
<dbReference type="PDBsum" id="5MDV"/>
<dbReference type="PDBsum" id="5MDW"/>
<dbReference type="PDBsum" id="5MDY"/>
<dbReference type="PDBsum" id="5MDZ"/>
<dbReference type="PDBsum" id="5MGP"/>
<dbReference type="PDBsum" id="5NCO"/>
<dbReference type="PDBsum" id="5NP6"/>
<dbReference type="PDBsum" id="5NWY"/>
<dbReference type="PDBsum" id="5O2R"/>
<dbReference type="PDBsum" id="5U4I"/>
<dbReference type="PDBsum" id="5U9F"/>
<dbReference type="PDBsum" id="5U9G"/>
<dbReference type="PDBsum" id="5UYK"/>
<dbReference type="PDBsum" id="5UYL"/>
<dbReference type="PDBsum" id="5UYM"/>
<dbReference type="PDBsum" id="5UYN"/>
<dbReference type="PDBsum" id="5UYP"/>
<dbReference type="PDBsum" id="5UYQ"/>
<dbReference type="PDBsum" id="5WDT"/>
<dbReference type="PDBsum" id="5WE4"/>
<dbReference type="PDBsum" id="5WE6"/>
<dbReference type="PDBsum" id="5WF0"/>
<dbReference type="PDBsum" id="5WFK"/>
<dbReference type="PDBsum" id="5WFS"/>
<dbReference type="PDBsum" id="6BU8"/>
<dbReference type="PDBsum" id="6BY1"/>
<dbReference type="PDBsum" id="6C4I"/>
<dbReference type="PDBsum" id="6DNC"/>
<dbReference type="PDBsum" id="6ENF"/>
<dbReference type="PDBsum" id="6ENJ"/>
<dbReference type="PDBsum" id="6ENU"/>
<dbReference type="PDBsum" id="6GBZ"/>
<dbReference type="PDBsum" id="6GC0"/>
<dbReference type="PDBsum" id="6GC4"/>
<dbReference type="PDBsum" id="6GC6"/>
<dbReference type="PDBsum" id="6GC7"/>
<dbReference type="PDBsum" id="6GC8"/>
<dbReference type="PDBsum" id="6GWT"/>
<dbReference type="PDBsum" id="6GXM"/>
<dbReference type="PDBsum" id="6GXN"/>
<dbReference type="PDBsum" id="6GXO"/>
<dbReference type="PDBsum" id="6GXP"/>
<dbReference type="PDBsum" id="6H4N"/>
<dbReference type="PDBsum" id="6H58"/>
<dbReference type="PDBsum" id="6HRM"/>
<dbReference type="PDBsum" id="6I0Y"/>
<dbReference type="PDBsum" id="6I7V"/>
<dbReference type="PDBsum" id="6O9J"/>
<dbReference type="PDBsum" id="6O9K"/>
<dbReference type="PDBsum" id="6OFX"/>
<dbReference type="PDBsum" id="6OG7"/>
<dbReference type="PDBsum" id="6OGF"/>
<dbReference type="PDBsum" id="6OGG"/>
<dbReference type="PDBsum" id="6OGI"/>
<dbReference type="PDBsum" id="6OM6"/>
<dbReference type="PDBsum" id="6ORE"/>
<dbReference type="PDBsum" id="6ORL"/>
<dbReference type="PDBsum" id="6OSK"/>
<dbReference type="PDBsum" id="6OSQ"/>
<dbReference type="PDBsum" id="6OST"/>
<dbReference type="PDBsum" id="6OT3"/>
<dbReference type="PDBsum" id="6OUO"/>
<dbReference type="PDBsum" id="6PJ6"/>
<dbReference type="PDBsum" id="6Q98"/>
<dbReference type="PDBsum" id="6Q9A"/>
<dbReference type="PDBsum" id="6QDW"/>
<dbReference type="PDBsum" id="6QUL"/>
<dbReference type="PDBsum" id="6S0K"/>
<dbReference type="PDBsum" id="6SZS"/>
<dbReference type="PDBsum" id="6TBV"/>
<dbReference type="PDBsum" id="6TC3"/>
<dbReference type="PDBsum" id="6U48"/>
<dbReference type="PDBsum" id="6VU3"/>
<dbReference type="PDBsum" id="6VWL"/>
<dbReference type="PDBsum" id="6VWM"/>
<dbReference type="PDBsum" id="6VWN"/>
<dbReference type="PDBsum" id="6VYQ"/>
<dbReference type="PDBsum" id="6VYR"/>
<dbReference type="PDBsum" id="6VYS"/>
<dbReference type="PDBsum" id="6VYT"/>
<dbReference type="PDBsum" id="6VYU"/>
<dbReference type="PDBsum" id="6VYW"/>
<dbReference type="PDBsum" id="6VYX"/>
<dbReference type="PDBsum" id="6VYY"/>
<dbReference type="PDBsum" id="6VYZ"/>
<dbReference type="PDBsum" id="6VZ2"/>
<dbReference type="PDBsum" id="6VZ3"/>
<dbReference type="PDBsum" id="6VZ5"/>
<dbReference type="PDBsum" id="6VZ7"/>
<dbReference type="PDBsum" id="6VZJ"/>
<dbReference type="PDBsum" id="6WD0"/>
<dbReference type="PDBsum" id="6WD1"/>
<dbReference type="PDBsum" id="6WD2"/>
<dbReference type="PDBsum" id="6WD3"/>
<dbReference type="PDBsum" id="6WD4"/>
<dbReference type="PDBsum" id="6WD5"/>
<dbReference type="PDBsum" id="6WD6"/>
<dbReference type="PDBsum" id="6WD7"/>
<dbReference type="PDBsum" id="6WD8"/>
<dbReference type="PDBsum" id="6WD9"/>
<dbReference type="PDBsum" id="6WDA"/>
<dbReference type="PDBsum" id="6WDB"/>
<dbReference type="PDBsum" id="6WDC"/>
<dbReference type="PDBsum" id="6WDD"/>
<dbReference type="PDBsum" id="6WDE"/>
<dbReference type="PDBsum" id="6WDF"/>
<dbReference type="PDBsum" id="6WDG"/>
<dbReference type="PDBsum" id="6WDH"/>
<dbReference type="PDBsum" id="6WDI"/>
<dbReference type="PDBsum" id="6WDJ"/>
<dbReference type="PDBsum" id="6WDK"/>
<dbReference type="PDBsum" id="6WDL"/>
<dbReference type="PDBsum" id="6WDM"/>
<dbReference type="PDBsum" id="6WNT"/>
<dbReference type="PDBsum" id="6WNV"/>
<dbReference type="PDBsum" id="6WNW"/>
<dbReference type="PDBsum" id="6X6T"/>
<dbReference type="PDBsum" id="6X7F"/>
<dbReference type="PDBsum" id="6X7K"/>
<dbReference type="PDBsum" id="6X9Q"/>
<dbReference type="PDBsum" id="6XDQ"/>
<dbReference type="PDBsum" id="6XDR"/>
<dbReference type="PDBsum" id="6XGF"/>
<dbReference type="PDBsum" id="6XII"/>
<dbReference type="PDBsum" id="6XIJ"/>
<dbReference type="PDBsum" id="6XZ7"/>
<dbReference type="PDBsum" id="6XZA"/>
<dbReference type="PDBsum" id="6XZB"/>
<dbReference type="PDBsum" id="6Y69"/>
<dbReference type="PDBsum" id="6YS3"/>
<dbReference type="PDBsum" id="6YSR"/>
<dbReference type="PDBsum" id="6YSS"/>
<dbReference type="PDBsum" id="6YST"/>
<dbReference type="PDBsum" id="6YSU"/>
<dbReference type="PDBsum" id="6ZTJ"/>
<dbReference type="PDBsum" id="6ZTL"/>
<dbReference type="PDBsum" id="6ZTM"/>
<dbReference type="PDBsum" id="6ZTN"/>
<dbReference type="PDBsum" id="6ZTO"/>
<dbReference type="PDBsum" id="6ZTP"/>
<dbReference type="PDBsum" id="6ZU1"/>
<dbReference type="PDBsum" id="7ABZ"/>
<dbReference type="PDBsum" id="7AC7"/>
<dbReference type="PDBsum" id="7ACJ"/>
<dbReference type="PDBsum" id="7ACR"/>
<dbReference type="PDBsum" id="7B5K"/>
<dbReference type="PDBsum" id="7BL2"/>
<dbReference type="PDBsum" id="7BL3"/>
<dbReference type="PDBsum" id="7BL4"/>
<dbReference type="PDBsum" id="7BL5"/>
<dbReference type="PDBsum" id="7BL6"/>
<dbReference type="PDBsum" id="7BV8"/>
<dbReference type="PDBsum" id="7D6Z"/>
<dbReference type="PDBsum" id="7D80"/>
<dbReference type="PDBsum" id="7JSS"/>
<dbReference type="PDBsum" id="7JSW"/>
<dbReference type="PDBsum" id="7JSZ"/>
<dbReference type="PDBsum" id="7JT1"/>
<dbReference type="PDBsum" id="7JT2"/>
<dbReference type="PDBsum" id="7JT3"/>
<dbReference type="PDBsum" id="7K00"/>
<dbReference type="PDBsum" id="7K50"/>
<dbReference type="PDBsum" id="7K51"/>
<dbReference type="PDBsum" id="7K52"/>
<dbReference type="PDBsum" id="7K53"/>
<dbReference type="PDBsum" id="7K54"/>
<dbReference type="PDBsum" id="7K55"/>
<dbReference type="PDBsum" id="7LV0"/>
<dbReference type="PDBsum" id="7LVK"/>
<dbReference type="PDBsum" id="7M5D"/>
<dbReference type="PDBsum" id="7N1P"/>
<dbReference type="PDBsum" id="7N2C"/>
<dbReference type="PDBsum" id="7N2U"/>
<dbReference type="PDBsum" id="7N2V"/>
<dbReference type="PDBsum" id="7N30"/>
<dbReference type="PDBsum" id="7N31"/>
<dbReference type="PDBsum" id="7NBU"/>
<dbReference type="PDBsum" id="7NWT"/>
<dbReference type="PDBsum" id="7O19"/>
<dbReference type="PDBsum" id="7O1A"/>
<dbReference type="PDBsum" id="7O1C"/>
<dbReference type="PDBsum" id="7OIZ"/>
<dbReference type="PDBsum" id="7OJ0"/>
<dbReference type="PDBsum" id="7P3K"/>
<dbReference type="PDBsum" id="7PJS"/>
<dbReference type="PDBsum" id="7PJT"/>
<dbReference type="PDBsum" id="7PJU"/>
<dbReference type="PDBsum" id="7PJV"/>
<dbReference type="PDBsum" id="7PJW"/>
<dbReference type="PDBsum" id="7PJX"/>
<dbReference type="PDBsum" id="7PJY"/>
<dbReference type="PDBsum" id="7PJZ"/>
<dbReference type="PDBsum" id="7Q4K"/>
<dbReference type="PDBsum" id="7QG8"/>
<dbReference type="PDBsum" id="7QGH"/>
<dbReference type="PDBsum" id="7QGN"/>
<dbReference type="PDBsum" id="7QGR"/>
<dbReference type="PDBsum" id="7QQ3"/>
<dbReference type="PDBsum" id="7S1G"/>
<dbReference type="PDBsum" id="7S1H"/>
<dbReference type="PDBsum" id="7S1I"/>
<dbReference type="PDBsum" id="7S1J"/>
<dbReference type="PDBsum" id="7S1K"/>
<dbReference type="PDBsum" id="7SA4"/>
<dbReference type="PDBsum" id="7SS9"/>
<dbReference type="PDBsum" id="7SSD"/>
<dbReference type="PDBsum" id="7SSL"/>
<dbReference type="PDBsum" id="7SSN"/>
<dbReference type="PDBsum" id="7SSO"/>
<dbReference type="PDBsum" id="7SSW"/>
<dbReference type="PDBsum" id="7ST2"/>
<dbReference type="PDBsum" id="7ST6"/>
<dbReference type="PDBsum" id="7ST7"/>
<dbReference type="PDBsum" id="7TOS"/>
<dbReference type="PDBsum" id="7UG7"/>
<dbReference type="PDBsum" id="7UPH"/>
<dbReference type="PDBsum" id="7Y7C"/>
<dbReference type="PDBsum" id="7Y7D"/>
<dbReference type="PDBsum" id="7Y7E"/>
<dbReference type="PDBsum" id="7Y7F"/>
<dbReference type="PDBsum" id="7Y7G"/>
<dbReference type="PDBsum" id="7Y7H"/>
<dbReference type="PDBsum" id="7YLA"/>
<dbReference type="PDBsum" id="7Z20"/>
<dbReference type="PDBsum" id="7ZOD"/>
<dbReference type="PDBsum" id="7ZP8"/>
<dbReference type="PDBsum" id="7ZQ5"/>
<dbReference type="PDBsum" id="7ZQ6"/>
<dbReference type="PDBsum" id="7ZTA"/>
<dbReference type="PDBsum" id="8A3L"/>
<dbReference type="PDBsum" id="8AKN"/>
<dbReference type="PDBsum" id="8AM9"/>
<dbReference type="PDBsum" id="8ANA"/>
<dbReference type="PDBsum" id="8AP4"/>
<dbReference type="PDBsum" id="8AYE"/>
<dbReference type="PDBsum" id="8B0X"/>
<dbReference type="PDBsum" id="8B7Y"/>
<dbReference type="PDBsum" id="8BF7"/>
<dbReference type="PDBsum" id="8BGE"/>
<dbReference type="PDBsum" id="8BGH"/>
<dbReference type="PDBsum" id="8BH4"/>
<dbReference type="PDBsum" id="8BHJ"/>
<dbReference type="PDBsum" id="8BHL"/>
<dbReference type="PDBsum" id="8BHN"/>
<dbReference type="PDBsum" id="8BHP"/>
<dbReference type="PDBsum" id="8BIL"/>
<dbReference type="PDBsum" id="8BIM"/>
<dbReference type="PDBsum" id="8C8X"/>
<dbReference type="PDBsum" id="8C8Y"/>
<dbReference type="PDBsum" id="8C8Z"/>
<dbReference type="PDBsum" id="8C90"/>
<dbReference type="PDBsum" id="8C91"/>
<dbReference type="PDBsum" id="8C92"/>
<dbReference type="PDBsum" id="8C93"/>
<dbReference type="PDBsum" id="8C94"/>
<dbReference type="PDBsum" id="8C95"/>
<dbReference type="PDBsum" id="8C96"/>
<dbReference type="PDBsum" id="8C98"/>
<dbReference type="PDBsum" id="8C99"/>
<dbReference type="PDBsum" id="8CAM"/>
<dbReference type="PDBsum" id="8CEU"/>
<dbReference type="PDBsum" id="8CGD"/>
<dbReference type="PDBsum" id="8CGK"/>
<dbReference type="PDBsum" id="8CGV"/>
<dbReference type="PDBsum" id="8EIU"/>
<dbReference type="PDBsum" id="8EKC"/>
<dbReference type="PDBsum" id="8EMM"/>
<dbReference type="PDBsum" id="8FIZ"/>
<dbReference type="PDBsum" id="8FTO"/>
<dbReference type="PDBsum" id="8FZD"/>
<dbReference type="PDBsum" id="8FZE"/>
<dbReference type="PDBsum" id="8FZF"/>
<dbReference type="PDBsum" id="8FZG"/>
<dbReference type="PDBsum" id="8FZH"/>
<dbReference type="PDBsum" id="8FZI"/>
<dbReference type="PDBsum" id="8FZJ"/>
<dbReference type="PDBsum" id="8G2U"/>
<dbReference type="PDBsum" id="8G31"/>
<dbReference type="PDBsum" id="8G34"/>
<dbReference type="PDBsum" id="8G38"/>
<dbReference type="PDBsum" id="8G6W"/>
<dbReference type="PDBsum" id="8G6X"/>
<dbReference type="PDBsum" id="8G6Y"/>
<dbReference type="PDBsum" id="8G7P"/>
<dbReference type="PDBsum" id="8G7Q"/>
<dbReference type="PDBsum" id="8G7R"/>
<dbReference type="PDBsum" id="8G7S"/>
<dbReference type="PDBsum" id="8HSP"/>
<dbReference type="PDBsum" id="8HTZ"/>
<dbReference type="PDBsum" id="8HU1"/>
<dbReference type="PDBsum" id="8IFB"/>
<dbReference type="PDBsum" id="8IFC"/>
<dbReference type="PDBsum" id="8J1Z"/>
<dbReference type="PDBsum" id="8P16"/>
<dbReference type="PDBsum" id="8P17"/>
<dbReference type="PDBsum" id="8P18"/>
<dbReference type="PDBsum" id="8PEG"/>
<dbReference type="PDBsum" id="8PHJ"/>
<dbReference type="PDBsum" id="8PKL"/>
<dbReference type="PDBsum" id="8PVA"/>
<dbReference type="PDBsum" id="8Q4F"/>
<dbReference type="PDBsum" id="8QBT"/>
<dbReference type="PDBsum" id="8QK7"/>
<dbReference type="PDBsum" id="8QOA"/>
<dbReference type="PDBsum" id="8R3V"/>
<dbReference type="PDBsum" id="8R6C"/>
<dbReference type="PDBsum" id="8R8M"/>
<dbReference type="PDBsum" id="8RCL"/>
<dbReference type="PDBsum" id="8RCM"/>
<dbReference type="PDBsum" id="8RCS"/>
<dbReference type="PDBsum" id="8RCT"/>
<dbReference type="PDBsum" id="8RPY"/>
<dbReference type="PDBsum" id="8RPZ"/>
<dbReference type="PDBsum" id="8RQ0"/>
<dbReference type="PDBsum" id="8RQ2"/>
<dbReference type="PDBsum" id="8SYL"/>
<dbReference type="PDBsum" id="8T5D"/>
<dbReference type="PDBsum" id="8T5H"/>
<dbReference type="PDBsum" id="8VS9"/>
<dbReference type="PDBsum" id="8VSA"/>
<dbReference type="PDBsum" id="8W51"/>
<dbReference type="PDBsum" id="8YUO"/>
<dbReference type="PDBsum" id="8YUP"/>
<dbReference type="PDBsum" id="8YUQ"/>
<dbReference type="PDBsum" id="8YUR"/>
<dbReference type="PDBsum" id="8YUS"/>
<dbReference type="PDBsum" id="9AX8"/>
<dbReference type="PDBsum" id="9D89"/>
<dbReference type="PDBsum" id="9FBV"/>
<dbReference type="PDBsum" id="9GFT"/>
<dbReference type="PDBsum" id="9GGR"/>
<dbReference type="PDBsum" id="9H3L"/>
<dbReference type="PDBsum" id="9H3N"/>
<dbReference type="PDBsum" id="9H3O"/>
<dbReference type="PDBsum" id="9H3P"/>
<dbReference type="PDBsum" id="9H3Q"/>
<dbReference type="PDBsum" id="9H3R"/>
<dbReference type="PDBsum" id="9H3S"/>
<dbReference type="PDBsum" id="9H3T"/>
<dbReference type="PDBsum" id="9H3U"/>
<dbReference type="PDBsum" id="9H3V"/>
<dbReference type="PDBsum" id="9H3W"/>
<dbReference type="PDBsum" id="9H3X"/>
<dbReference type="PDBsum" id="9H3Y"/>
<dbReference type="PDBsum" id="9H3Z"/>
<dbReference type="PDBsum" id="9HA3"/>
<dbReference type="PDBsum" id="9HA4"/>
<dbReference type="PDBsum" id="9HA5"/>
<dbReference type="PDBsum" id="9HA6"/>
<dbReference type="PDBsum" id="9HA7"/>
<dbReference type="PDBsum" id="9HAI"/>
<dbReference type="PDBsum" id="9HAM"/>
<dbReference type="PDBsum" id="9MOR"/>
<dbReference type="PDBsum" id="9MQ4"/>
<dbReference type="EMDB" id="EMD-0076"/>
<dbReference type="EMDB" id="EMD-0080"/>
<dbReference type="EMDB" id="EMD-0081"/>
<dbReference type="EMDB" id="EMD-0082"/>
<dbReference type="EMDB" id="EMD-0083"/>
<dbReference type="EMDB" id="EMD-0137"/>
<dbReference type="EMDB" id="EMD-0139"/>
<dbReference type="EMDB" id="EMD-0261"/>
<dbReference type="EMDB" id="EMD-0322"/>
<dbReference type="EMDB" id="EMD-10073"/>
<dbReference type="EMDB" id="EMD-10353"/>
<dbReference type="EMDB" id="EMD-10453"/>
<dbReference type="EMDB" id="EMD-10458"/>
<dbReference type="EMDB" id="EMD-10655"/>
<dbReference type="EMDB" id="EMD-10656"/>
<dbReference type="EMDB" id="EMD-10657"/>
<dbReference type="EMDB" id="EMD-10705"/>
<dbReference type="EMDB" id="EMD-10905"/>
<dbReference type="EMDB" id="EMD-10906"/>
<dbReference type="EMDB" id="EMD-10907"/>
<dbReference type="EMDB" id="EMD-10908"/>
<dbReference type="EMDB" id="EMD-11418"/>
<dbReference type="EMDB" id="EMD-11419"/>
<dbReference type="EMDB" id="EMD-11420"/>
<dbReference type="EMDB" id="EMD-11421"/>
<dbReference type="EMDB" id="EMD-11422"/>
<dbReference type="EMDB" id="EMD-11423"/>
<dbReference type="EMDB" id="EMD-11426"/>
<dbReference type="EMDB" id="EMD-11710"/>
<dbReference type="EMDB" id="EMD-11713"/>
<dbReference type="EMDB" id="EMD-11717"/>
<dbReference type="EMDB" id="EMD-11718"/>
<dbReference type="EMDB" id="EMD-12035"/>
<dbReference type="EMDB" id="EMD-12215"/>
<dbReference type="EMDB" id="EMD-12216"/>
<dbReference type="EMDB" id="EMD-12217"/>
<dbReference type="EMDB" id="EMD-12218"/>
<dbReference type="EMDB" id="EMD-12219"/>
<dbReference type="EMDB" id="EMD-12261"/>
<dbReference type="EMDB" id="EMD-12635"/>
<dbReference type="EMDB" id="EMD-12693"/>
<dbReference type="EMDB" id="EMD-12694"/>
<dbReference type="EMDB" id="EMD-12695"/>
<dbReference type="EMDB" id="EMD-12936"/>
<dbReference type="EMDB" id="EMD-12937"/>
<dbReference type="EMDB" id="EMD-13180"/>
<dbReference type="EMDB" id="EMD-13458"/>
<dbReference type="EMDB" id="EMD-13459"/>
<dbReference type="EMDB" id="EMD-13461"/>
<dbReference type="EMDB" id="EMD-13462"/>
<dbReference type="EMDB" id="EMD-13463"/>
<dbReference type="EMDB" id="EMD-13464"/>
<dbReference type="EMDB" id="EMD-13465"/>
<dbReference type="EMDB" id="EMD-13805"/>
<dbReference type="EMDB" id="EMD-13952"/>
<dbReference type="EMDB" id="EMD-13955"/>
<dbReference type="EMDB" id="EMD-13956"/>
<dbReference type="EMDB" id="EMD-13958"/>
<dbReference type="EMDB" id="EMD-14121"/>
<dbReference type="EMDB" id="EMD-14454"/>
<dbReference type="EMDB" id="EMD-14846"/>
<dbReference type="EMDB" id="EMD-14850"/>
<dbReference type="EMDB" id="EMD-14864"/>
<dbReference type="EMDB" id="EMD-14865"/>
<dbReference type="EMDB" id="EMD-14956"/>
<dbReference type="EMDB" id="EMD-15116"/>
<dbReference type="EMDB" id="EMD-15558"/>
<dbReference type="EMDB" id="EMD-15712"/>
<dbReference type="EMDB" id="EMD-15793"/>
<dbReference type="EMDB" id="EMD-15905"/>
<dbReference type="EMDB" id="EMD-16015"/>
<dbReference type="EMDB" id="EMD-16029"/>
<dbReference type="EMDB" id="EMD-16031"/>
<dbReference type="EMDB" id="EMD-16047"/>
<dbReference type="EMDB" id="EMD-16057"/>
<dbReference type="EMDB" id="EMD-16059"/>
<dbReference type="EMDB" id="EMD-16062"/>
<dbReference type="EMDB" id="EMD-16065"/>
<dbReference type="EMDB" id="EMD-16081"/>
<dbReference type="EMDB" id="EMD-16082"/>
<dbReference type="EMDB" id="EMD-16494"/>
<dbReference type="EMDB" id="EMD-16495"/>
<dbReference type="EMDB" id="EMD-16496"/>
<dbReference type="EMDB" id="EMD-16497"/>
<dbReference type="EMDB" id="EMD-16498"/>
<dbReference type="EMDB" id="EMD-16499"/>
<dbReference type="EMDB" id="EMD-16500"/>
<dbReference type="EMDB" id="EMD-16501"/>
<dbReference type="EMDB" id="EMD-16502"/>
<dbReference type="EMDB" id="EMD-16503"/>
<dbReference type="EMDB" id="EMD-16505"/>
<dbReference type="EMDB" id="EMD-16506"/>
<dbReference type="EMDB" id="EMD-16530"/>
<dbReference type="EMDB" id="EMD-16613"/>
<dbReference type="EMDB" id="EMD-16641"/>
<dbReference type="EMDB" id="EMD-16646"/>
<dbReference type="EMDB" id="EMD-16652"/>
<dbReference type="EMDB" id="EMD-17346"/>
<dbReference type="EMDB" id="EMD-17347"/>
<dbReference type="EMDB" id="EMD-17348"/>
<dbReference type="EMDB" id="EMD-17631"/>
<dbReference type="EMDB" id="EMD-17667"/>
<dbReference type="EMDB" id="EMD-17743"/>
<dbReference type="EMDB" id="EMD-17959"/>
<dbReference type="EMDB" id="EMD-18145"/>
<dbReference type="EMDB" id="EMD-18320"/>
<dbReference type="EMDB" id="EMD-18458"/>
<dbReference type="EMDB" id="EMD-18534"/>
<dbReference type="EMDB" id="EMD-18875"/>
<dbReference type="EMDB" id="EMD-18950"/>
<dbReference type="EMDB" id="EMD-19004"/>
<dbReference type="EMDB" id="EMD-19054"/>
<dbReference type="EMDB" id="EMD-19055"/>
<dbReference type="EMDB" id="EMD-19058"/>
<dbReference type="EMDB" id="EMD-19059"/>
<dbReference type="EMDB" id="EMD-19426"/>
<dbReference type="EMDB" id="EMD-19427"/>
<dbReference type="EMDB" id="EMD-19428"/>
<dbReference type="EMDB" id="EMD-19429"/>
<dbReference type="EMDB" id="EMD-20048"/>
<dbReference type="EMDB" id="EMD-20052"/>
<dbReference type="EMDB" id="EMD-21420"/>
<dbReference type="EMDB" id="EMD-21421"/>
<dbReference type="EMDB" id="EMD-21422"/>
<dbReference type="EMDB" id="EMD-21620"/>
<dbReference type="EMDB" id="EMD-21625"/>
<dbReference type="EMDB" id="EMD-21630"/>
<dbReference type="EMDB" id="EMD-21631"/>
<dbReference type="EMDB" id="EMD-21632"/>
<dbReference type="EMDB" id="EMD-21633"/>
<dbReference type="EMDB" id="EMD-21634"/>
<dbReference type="EMDB" id="EMD-21635"/>
<dbReference type="EMDB" id="EMD-21636"/>
<dbReference type="EMDB" id="EMD-21637"/>
<dbReference type="EMDB" id="EMD-21638"/>
<dbReference type="EMDB" id="EMD-21639"/>
<dbReference type="EMDB" id="EMD-21640"/>
<dbReference type="EMDB" id="EMD-21641"/>
<dbReference type="EMDB" id="EMD-21856"/>
<dbReference type="EMDB" id="EMD-21857"/>
<dbReference type="EMDB" id="EMD-21858"/>
<dbReference type="EMDB" id="EMD-22459"/>
<dbReference type="EMDB" id="EMD-22461"/>
<dbReference type="EMDB" id="EMD-22464"/>
<dbReference type="EMDB" id="EMD-22466"/>
<dbReference type="EMDB" id="EMD-22469"/>
<dbReference type="EMDB" id="EMD-22472"/>
<dbReference type="EMDB" id="EMD-22669"/>
<dbReference type="EMDB" id="EMD-22670"/>
<dbReference type="EMDB" id="EMD-22671"/>
<dbReference type="EMDB" id="EMD-22672"/>
<dbReference type="EMDB" id="EMD-22673"/>
<dbReference type="EMDB" id="EMD-22674"/>
<dbReference type="EMDB" id="EMD-23528"/>
<dbReference type="EMDB" id="EMD-24120"/>
<dbReference type="EMDB" id="EMD-24132"/>
<dbReference type="EMDB" id="EMD-24133"/>
<dbReference type="EMDB" id="EMD-24134"/>
<dbReference type="EMDB" id="EMD-24135"/>
<dbReference type="EMDB" id="EMD-24136"/>
<dbReference type="EMDB" id="EMD-24803"/>
<dbReference type="EMDB" id="EMD-25405"/>
<dbReference type="EMDB" id="EMD-25407"/>
<dbReference type="EMDB" id="EMD-25409"/>
<dbReference type="EMDB" id="EMD-25410"/>
<dbReference type="EMDB" id="EMD-25411"/>
<dbReference type="EMDB" id="EMD-25415"/>
<dbReference type="EMDB" id="EMD-25418"/>
<dbReference type="EMDB" id="EMD-25420"/>
<dbReference type="EMDB" id="EMD-25421"/>
<dbReference type="EMDB" id="EMD-29689"/>
<dbReference type="EMDB" id="EMD-30215"/>
<dbReference type="EMDB" id="EMD-30598"/>
<dbReference type="EMDB" id="EMD-30611"/>
<dbReference type="EMDB" id="EMD-33660"/>
<dbReference type="EMDB" id="EMD-33661"/>
<dbReference type="EMDB" id="EMD-33662"/>
<dbReference type="EMDB" id="EMD-33663"/>
<dbReference type="EMDB" id="EMD-33664"/>
<dbReference type="EMDB" id="EMD-33665"/>
<dbReference type="EMDB" id="EMD-33904"/>
<dbReference type="EMDB" id="EMD-3489"/>
<dbReference type="EMDB" id="EMD-3490"/>
<dbReference type="EMDB" id="EMD-3492"/>
<dbReference type="EMDB" id="EMD-3493"/>
<dbReference type="EMDB" id="EMD-35001"/>
<dbReference type="EMDB" id="EMD-35020"/>
<dbReference type="EMDB" id="EMD-35022"/>
<dbReference type="EMDB" id="EMD-3508"/>
<dbReference type="EMDB" id="EMD-35411"/>
<dbReference type="EMDB" id="EMD-35412"/>
<dbReference type="EMDB" id="EMD-35939"/>
<dbReference type="EMDB" id="EMD-3617"/>
<dbReference type="EMDB" id="EMD-3713"/>
<dbReference type="EMDB" id="EMD-37271"/>
<dbReference type="EMDB" id="EMD-3730"/>
<dbReference type="EMDB" id="EMD-3898"/>
<dbReference type="EMDB" id="EMD-3899"/>
<dbReference type="EMDB" id="EMD-3903"/>
<dbReference type="EMDB" id="EMD-39577"/>
<dbReference type="EMDB" id="EMD-39578"/>
<dbReference type="EMDB" id="EMD-39579"/>
<dbReference type="EMDB" id="EMD-39580"/>
<dbReference type="EMDB" id="EMD-39581"/>
<dbReference type="EMDB" id="EMD-4001"/>
<dbReference type="EMDB" id="EMD-41049"/>
<dbReference type="EMDB" id="EMD-41050"/>
<dbReference type="EMDB" id="EMD-4121"/>
<dbReference type="EMDB" id="EMD-4122"/>
<dbReference type="EMDB" id="EMD-4123"/>
<dbReference type="EMDB" id="EMD-4124"/>
<dbReference type="EMDB" id="EMD-4125"/>
<dbReference type="EMDB" id="EMD-4126"/>
<dbReference type="EMDB" id="EMD-4378"/>
<dbReference type="EMDB" id="EMD-4379"/>
<dbReference type="EMDB" id="EMD-4380"/>
<dbReference type="EMDB" id="EMD-4381"/>
<dbReference type="EMDB" id="EMD-4382"/>
<dbReference type="EMDB" id="EMD-4383"/>
<dbReference type="EMDB" id="EMD-43930"/>
<dbReference type="EMDB" id="EMD-4477"/>
<dbReference type="EMDB" id="EMD-4478"/>
<dbReference type="EMDB" id="EMD-4638"/>
<dbReference type="EMDB" id="EMD-46632"/>
<dbReference type="EMDB" id="EMD-50296"/>
<dbReference type="EMDB" id="EMD-51318"/>
<dbReference type="EMDB" id="EMD-51340"/>
<dbReference type="EMDB" id="EMD-51829"/>
<dbReference type="EMDB" id="EMD-51831"/>
<dbReference type="EMDB" id="EMD-51832"/>
<dbReference type="EMDB" id="EMD-51833"/>
<dbReference type="EMDB" id="EMD-51834"/>
<dbReference type="EMDB" id="EMD-51835"/>
<dbReference type="EMDB" id="EMD-51836"/>
<dbReference type="EMDB" id="EMD-51837"/>
<dbReference type="EMDB" id="EMD-51838"/>
<dbReference type="EMDB" id="EMD-51839"/>
<dbReference type="EMDB" id="EMD-51840"/>
<dbReference type="EMDB" id="EMD-51841"/>
<dbReference type="EMDB" id="EMD-51842"/>
<dbReference type="EMDB" id="EMD-51843"/>
<dbReference type="EMDB" id="EMD-51975"/>
<dbReference type="EMDB" id="EMD-51976"/>
<dbReference type="EMDB" id="EMD-51977"/>
<dbReference type="EMDB" id="EMD-51978"/>
<dbReference type="EMDB" id="EMD-51979"/>
<dbReference type="EMDB" id="EMD-51981"/>
<dbReference type="EMDB" id="EMD-51983"/>
<dbReference type="EMDB" id="EMD-6667"/>
<dbReference type="EMDB" id="EMD-7289"/>
<dbReference type="EMDB" id="EMD-7341"/>
<dbReference type="EMDB" id="EMD-8000"/>
<dbReference type="EMDB" id="EMD-8001"/>
<dbReference type="EMDB" id="EMD-8002"/>
<dbReference type="EMDB" id="EMD-8003"/>
<dbReference type="EMDB" id="EMD-8004"/>
<dbReference type="EMDB" id="EMD-8107"/>
<dbReference type="EMDB" id="EMD-8175"/>
<dbReference type="EMDB" id="EMD-8176"/>
<dbReference type="EMDB" id="EMD-8237"/>
<dbReference type="EMDB" id="EMD-8238"/>
<dbReference type="EMDB" id="EMD-8279"/>
<dbReference type="EMDB" id="EMD-8280"/>
<dbReference type="EMDB" id="EMD-8281"/>
<dbReference type="EMDB" id="EMD-8282"/>
<dbReference type="EMDB" id="EMD-8505"/>
<dbReference type="EMDB" id="EMD-8615"/>
<dbReference type="EMDB" id="EMD-8616"/>
<dbReference type="EMDB" id="EMD-8617"/>
<dbReference type="EMDB" id="EMD-8618"/>
<dbReference type="EMDB" id="EMD-8619"/>
<dbReference type="EMDB" id="EMD-8620"/>
<dbReference type="EMDB" id="EMD-8813"/>
<dbReference type="EMDB" id="EMD-8814"/>
<dbReference type="EMDB" id="EMD-8815"/>
<dbReference type="EMDB" id="EMD-8828"/>
<dbReference type="SMR" id="P0AG51"/>
<dbReference type="BioGRID" id="4263442">
    <property type="interactions" value="2"/>
</dbReference>
<dbReference type="BioGRID" id="852109">
    <property type="interactions" value="2"/>
</dbReference>
<dbReference type="ComplexPortal" id="CPX-3807">
    <property type="entry name" value="50S large ribosomal subunit"/>
</dbReference>
<dbReference type="DIP" id="DIP-35970N"/>
<dbReference type="FunCoup" id="P0AG51">
    <property type="interactions" value="537"/>
</dbReference>
<dbReference type="IntAct" id="P0AG51">
    <property type="interactions" value="16"/>
</dbReference>
<dbReference type="STRING" id="511145.b3302"/>
<dbReference type="jPOST" id="P0AG51"/>
<dbReference type="PaxDb" id="511145-b3302"/>
<dbReference type="EnsemblBacteria" id="AAC76327">
    <property type="protein sequence ID" value="AAC76327"/>
    <property type="gene ID" value="b3302"/>
</dbReference>
<dbReference type="GeneID" id="93778685"/>
<dbReference type="GeneID" id="947797"/>
<dbReference type="KEGG" id="ecj:JW3264"/>
<dbReference type="KEGG" id="eco:b3302"/>
<dbReference type="KEGG" id="ecoc:C3026_17950"/>
<dbReference type="PATRIC" id="fig|1411691.4.peg.3429"/>
<dbReference type="EchoBASE" id="EB0881"/>
<dbReference type="eggNOG" id="COG1841">
    <property type="taxonomic scope" value="Bacteria"/>
</dbReference>
<dbReference type="HOGENOM" id="CLU_131047_1_4_6"/>
<dbReference type="InParanoid" id="P0AG51"/>
<dbReference type="OMA" id="KMHKTRE"/>
<dbReference type="OrthoDB" id="9812790at2"/>
<dbReference type="PhylomeDB" id="P0AG51"/>
<dbReference type="BioCyc" id="EcoCyc:EG10888-MONOMER"/>
<dbReference type="BioCyc" id="MetaCyc:EG10888-MONOMER"/>
<dbReference type="EvolutionaryTrace" id="P0AG51"/>
<dbReference type="PRO" id="PR:P0AG51"/>
<dbReference type="Proteomes" id="UP000000625">
    <property type="component" value="Chromosome"/>
</dbReference>
<dbReference type="GO" id="GO:0005737">
    <property type="term" value="C:cytoplasm"/>
    <property type="evidence" value="ECO:0000314"/>
    <property type="project" value="ComplexPortal"/>
</dbReference>
<dbReference type="GO" id="GO:0022625">
    <property type="term" value="C:cytosolic large ribosomal subunit"/>
    <property type="evidence" value="ECO:0000314"/>
    <property type="project" value="CAFA"/>
</dbReference>
<dbReference type="GO" id="GO:0003735">
    <property type="term" value="F:structural constituent of ribosome"/>
    <property type="evidence" value="ECO:0000314"/>
    <property type="project" value="CAFA"/>
</dbReference>
<dbReference type="GO" id="GO:0002181">
    <property type="term" value="P:cytoplasmic translation"/>
    <property type="evidence" value="ECO:0000303"/>
    <property type="project" value="ComplexPortal"/>
</dbReference>
<dbReference type="GO" id="GO:0000027">
    <property type="term" value="P:ribosomal large subunit assembly"/>
    <property type="evidence" value="ECO:0000314"/>
    <property type="project" value="CAFA"/>
</dbReference>
<dbReference type="CDD" id="cd01658">
    <property type="entry name" value="Ribosomal_L30"/>
    <property type="match status" value="1"/>
</dbReference>
<dbReference type="FunFam" id="3.30.1390.20:FF:000001">
    <property type="entry name" value="50S ribosomal protein L30"/>
    <property type="match status" value="1"/>
</dbReference>
<dbReference type="Gene3D" id="3.30.1390.20">
    <property type="entry name" value="Ribosomal protein L30, ferredoxin-like fold domain"/>
    <property type="match status" value="1"/>
</dbReference>
<dbReference type="HAMAP" id="MF_01371_B">
    <property type="entry name" value="Ribosomal_uL30_B"/>
    <property type="match status" value="1"/>
</dbReference>
<dbReference type="InterPro" id="IPR036919">
    <property type="entry name" value="Ribo_uL30_ferredoxin-like_sf"/>
</dbReference>
<dbReference type="InterPro" id="IPR005996">
    <property type="entry name" value="Ribosomal_uL30_bac-type"/>
</dbReference>
<dbReference type="InterPro" id="IPR018038">
    <property type="entry name" value="Ribosomal_uL30_CS"/>
</dbReference>
<dbReference type="InterPro" id="IPR016082">
    <property type="entry name" value="Ribosomal_uL30_ferredoxin-like"/>
</dbReference>
<dbReference type="NCBIfam" id="TIGR01308">
    <property type="entry name" value="rpmD_bact"/>
    <property type="match status" value="1"/>
</dbReference>
<dbReference type="PANTHER" id="PTHR15892:SF2">
    <property type="entry name" value="LARGE RIBOSOMAL SUBUNIT PROTEIN UL30M"/>
    <property type="match status" value="1"/>
</dbReference>
<dbReference type="PANTHER" id="PTHR15892">
    <property type="entry name" value="MITOCHONDRIAL RIBOSOMAL PROTEIN L30"/>
    <property type="match status" value="1"/>
</dbReference>
<dbReference type="Pfam" id="PF00327">
    <property type="entry name" value="Ribosomal_L30"/>
    <property type="match status" value="1"/>
</dbReference>
<dbReference type="PIRSF" id="PIRSF002211">
    <property type="entry name" value="Ribosomal_L30_bac-type"/>
    <property type="match status" value="1"/>
</dbReference>
<dbReference type="SUPFAM" id="SSF55129">
    <property type="entry name" value="Ribosomal protein L30p/L7e"/>
    <property type="match status" value="1"/>
</dbReference>
<dbReference type="PROSITE" id="PS00634">
    <property type="entry name" value="RIBOSOMAL_L30"/>
    <property type="match status" value="1"/>
</dbReference>
<feature type="initiator methionine" description="Removed" evidence="10">
    <location>
        <position position="1"/>
    </location>
</feature>
<feature type="chain" id="PRO_0000104590" description="Large ribosomal subunit protein uL30">
    <location>
        <begin position="2"/>
        <end position="59"/>
    </location>
</feature>
<feature type="strand" evidence="14">
    <location>
        <begin position="4"/>
        <end position="9"/>
    </location>
</feature>
<feature type="strand" evidence="12">
    <location>
        <begin position="13"/>
        <end position="15"/>
    </location>
</feature>
<feature type="helix" evidence="14">
    <location>
        <begin position="18"/>
        <end position="27"/>
    </location>
</feature>
<feature type="strand" evidence="13">
    <location>
        <begin position="31"/>
        <end position="33"/>
    </location>
</feature>
<feature type="strand" evidence="14">
    <location>
        <begin position="35"/>
        <end position="39"/>
    </location>
</feature>
<feature type="helix" evidence="14">
    <location>
        <begin position="42"/>
        <end position="50"/>
    </location>
</feature>
<feature type="helix" evidence="14">
    <location>
        <begin position="51"/>
        <end position="54"/>
    </location>
</feature>
<feature type="strand" evidence="14">
    <location>
        <begin position="55"/>
        <end position="58"/>
    </location>
</feature>
<protein>
    <recommendedName>
        <fullName evidence="1 11">Large ribosomal subunit protein uL30</fullName>
    </recommendedName>
    <alternativeName>
        <fullName>50S ribosomal protein L30</fullName>
    </alternativeName>
</protein>
<accession>P0AG51</accession>
<accession>P02430</accession>
<accession>Q2M6W7</accession>
<organism>
    <name type="scientific">Escherichia coli (strain K12)</name>
    <dbReference type="NCBI Taxonomy" id="83333"/>
    <lineage>
        <taxon>Bacteria</taxon>
        <taxon>Pseudomonadati</taxon>
        <taxon>Pseudomonadota</taxon>
        <taxon>Gammaproteobacteria</taxon>
        <taxon>Enterobacterales</taxon>
        <taxon>Enterobacteriaceae</taxon>
        <taxon>Escherichia</taxon>
    </lineage>
</organism>
<gene>
    <name evidence="1" type="primary">rpmD</name>
    <name type="ordered locus">b3302</name>
    <name type="ordered locus">JW3264</name>
</gene>
<comment type="subunit">
    <text evidence="2 3 4 5 6 7 8 9 10">Part of the 50S ribosomal subunit.</text>
</comment>
<comment type="mass spectrometry"/>
<comment type="miscellaneous">
    <text>This protein is located near the guanosine triphosphatase center of the 50S subunit.</text>
</comment>
<comment type="similarity">
    <text evidence="1">Belongs to the universal ribosomal protein uL30 family.</text>
</comment>
<keyword id="KW-0002">3D-structure</keyword>
<keyword id="KW-0903">Direct protein sequencing</keyword>
<keyword id="KW-1185">Reference proteome</keyword>
<keyword id="KW-0687">Ribonucleoprotein</keyword>
<keyword id="KW-0689">Ribosomal protein</keyword>
<reference key="1">
    <citation type="journal article" date="1983" name="Nucleic Acids Res.">
        <title>The spc ribosomal protein operon of Escherichia coli: sequence and cotranscription of the ribosomal protein genes and a protein export gene.</title>
        <authorList>
            <person name="Cerretti D.P."/>
            <person name="Dean D."/>
            <person name="Davis G.R."/>
            <person name="Bedwell D.M."/>
            <person name="Nomura M."/>
        </authorList>
    </citation>
    <scope>NUCLEOTIDE SEQUENCE [GENOMIC DNA]</scope>
    <source>
        <strain>K12</strain>
    </source>
</reference>
<reference key="2">
    <citation type="journal article" date="1997" name="Science">
        <title>The complete genome sequence of Escherichia coli K-12.</title>
        <authorList>
            <person name="Blattner F.R."/>
            <person name="Plunkett G. III"/>
            <person name="Bloch C.A."/>
            <person name="Perna N.T."/>
            <person name="Burland V."/>
            <person name="Riley M."/>
            <person name="Collado-Vides J."/>
            <person name="Glasner J.D."/>
            <person name="Rode C.K."/>
            <person name="Mayhew G.F."/>
            <person name="Gregor J."/>
            <person name="Davis N.W."/>
            <person name="Kirkpatrick H.A."/>
            <person name="Goeden M.A."/>
            <person name="Rose D.J."/>
            <person name="Mau B."/>
            <person name="Shao Y."/>
        </authorList>
    </citation>
    <scope>NUCLEOTIDE SEQUENCE [LARGE SCALE GENOMIC DNA]</scope>
    <source>
        <strain>K12 / MG1655 / ATCC 47076</strain>
    </source>
</reference>
<reference key="3">
    <citation type="journal article" date="2006" name="Mol. Syst. Biol.">
        <title>Highly accurate genome sequences of Escherichia coli K-12 strains MG1655 and W3110.</title>
        <authorList>
            <person name="Hayashi K."/>
            <person name="Morooka N."/>
            <person name="Yamamoto Y."/>
            <person name="Fujita K."/>
            <person name="Isono K."/>
            <person name="Choi S."/>
            <person name="Ohtsubo E."/>
            <person name="Baba T."/>
            <person name="Wanner B.L."/>
            <person name="Mori H."/>
            <person name="Horiuchi T."/>
        </authorList>
    </citation>
    <scope>NUCLEOTIDE SEQUENCE [LARGE SCALE GENOMIC DNA]</scope>
    <source>
        <strain>K12 / W3110 / ATCC 27325 / DSM 5911</strain>
    </source>
</reference>
<reference key="4">
    <citation type="journal article" date="1975" name="FEBS Lett.">
        <title>The primary structure of protein L30 from Escherichia coli ribosomes.</title>
        <authorList>
            <person name="Ritter E."/>
            <person name="Wittmann-Liebold B."/>
        </authorList>
    </citation>
    <scope>PROTEIN SEQUENCE OF 2-59</scope>
    <scope>SUBUNIT</scope>
    <source>
        <strain>K</strain>
    </source>
</reference>
<reference key="5">
    <citation type="journal article" date="1997" name="Electrophoresis">
        <title>Escherichia coli proteome analysis using the gene-protein database.</title>
        <authorList>
            <person name="VanBogelen R.A."/>
            <person name="Abshire K.Z."/>
            <person name="Moldover B."/>
            <person name="Olson E.R."/>
            <person name="Neidhardt F.C."/>
        </authorList>
    </citation>
    <scope>IDENTIFICATION BY 2D-GEL</scope>
</reference>
<reference key="6">
    <citation type="journal article" date="1999" name="Anal. Biochem.">
        <title>Observation of Escherichia coli ribosomal proteins and their posttranslational modifications by mass spectrometry.</title>
        <authorList>
            <person name="Arnold R.J."/>
            <person name="Reilly J.P."/>
        </authorList>
    </citation>
    <scope>MASS SPECTROMETRY</scope>
    <scope>SUBUNIT</scope>
    <source>
        <strain>K12 / ATCC 25404 / DSM 5698 / NCIMB 11290</strain>
    </source>
</reference>
<reference key="7">
    <citation type="journal article" date="2014" name="Curr. Opin. Struct. Biol.">
        <title>A new system for naming ribosomal proteins.</title>
        <authorList>
            <person name="Ban N."/>
            <person name="Beckmann R."/>
            <person name="Cate J.H.D."/>
            <person name="Dinman J.D."/>
            <person name="Dragon F."/>
            <person name="Ellis S.R."/>
            <person name="Lafontaine D.L.J."/>
            <person name="Lindahl L."/>
            <person name="Liljas A."/>
            <person name="Lipton J.M."/>
            <person name="McAlear M.A."/>
            <person name="Moore P.B."/>
            <person name="Noller H.F."/>
            <person name="Ortega J."/>
            <person name="Panse V.G."/>
            <person name="Ramakrishnan V."/>
            <person name="Spahn C.M.T."/>
            <person name="Steitz T.A."/>
            <person name="Tchorzewski M."/>
            <person name="Tollervey D."/>
            <person name="Warren A.J."/>
            <person name="Williamson J.R."/>
            <person name="Wilson D."/>
            <person name="Yonath A."/>
            <person name="Yusupov M."/>
        </authorList>
    </citation>
    <scope>NOMENCLATURE</scope>
</reference>
<reference key="8">
    <citation type="journal article" date="2003" name="Cell">
        <title>Study of the structural dynamics of the E. coli 70S ribosome using real-space refinement.</title>
        <authorList>
            <person name="Gao H."/>
            <person name="Sengupta J."/>
            <person name="Valle M."/>
            <person name="Korostelev A."/>
            <person name="Eswar N."/>
            <person name="Stagg S.M."/>
            <person name="Van Roey P."/>
            <person name="Agrawal R.K."/>
            <person name="Harvey S.C."/>
            <person name="Sali A."/>
            <person name="Chapman M.S."/>
            <person name="Frank J."/>
        </authorList>
    </citation>
    <scope>STRUCTURE BY ELECTRON MICROSCOPY (11.50 ANGSTROMS)</scope>
    <scope>SUBUNIT</scope>
    <source>
        <strain>MRE-600</strain>
    </source>
</reference>
<reference key="9">
    <citation type="journal article" date="2005" name="Science">
        <title>Structures of the bacterial ribosome at 3.5 A resolution.</title>
        <authorList>
            <person name="Schuwirth B.S."/>
            <person name="Borovinskaya M.A."/>
            <person name="Hau C.W."/>
            <person name="Zhang W."/>
            <person name="Vila-Sanjurjo A."/>
            <person name="Holton J.M."/>
            <person name="Cate J.H.D."/>
        </authorList>
    </citation>
    <scope>X-RAY CRYSTALLOGRAPHY (3.46 ANGSTROMS) OF 2 DIFFERENT RIBOSOME STRUCTURES</scope>
    <scope>SUBUNIT</scope>
    <source>
        <strain>MRE-600</strain>
    </source>
</reference>
<reference key="10">
    <citation type="journal article" date="2014" name="Cell Rep.">
        <title>Molecular basis for the ribosome functioning as an L-tryptophan sensor.</title>
        <authorList>
            <person name="Bischoff L."/>
            <person name="Berninghausen O."/>
            <person name="Beckmann R."/>
        </authorList>
    </citation>
    <scope>STRUCTURE BY ELECTRON MICROSCOPY (3.80 ANGSTROMS) OF 2-59 IN TNAC-STALLED 50S RIBOSOMAL SUBUNIT</scope>
    <scope>SUBUNIT</scope>
    <source>
        <strain>K12 / A19 / KC6</strain>
    </source>
</reference>
<reference key="11">
    <citation type="journal article" date="2014" name="PLoS Biol.">
        <title>Structural and functional insights into the mode of action of a universally conserved Obg GTPase.</title>
        <authorList>
            <person name="Feng B."/>
            <person name="Mandava C.S."/>
            <person name="Guo Q."/>
            <person name="Wang J."/>
            <person name="Cao W."/>
            <person name="Li N."/>
            <person name="Zhang Y."/>
            <person name="Zhang Y."/>
            <person name="Wang Z."/>
            <person name="Wu J."/>
            <person name="Sanyal S."/>
            <person name="Lei J."/>
            <person name="Gao N."/>
        </authorList>
    </citation>
    <scope>STRUCTURE BY ELECTRON MICROSCOPY (5.5 ANGSTROMS) OF 2-59 OF 50S RIBOSOMAL SUBUNIT IN COMPLEX WITH OBGE AND GMP-PNP</scope>
    <scope>SUBUNIT</scope>
</reference>
<reference key="12">
    <citation type="journal article" date="2017" name="Nature">
        <title>Mechanistic insights into the alternative translation termination by ArfA and RF2.</title>
        <authorList>
            <person name="Ma C."/>
            <person name="Kurita D."/>
            <person name="Li N."/>
            <person name="Chen Y."/>
            <person name="Himeno H."/>
            <person name="Gao N."/>
        </authorList>
    </citation>
    <scope>STRUCTURE BY ELECTRON MICROSCOPY (3.0 ANGSTROMS) OF 70S RIBOSOME IN COMPLEX WITH ARFA AND RF2</scope>
    <scope>SUBUNIT</scope>
</reference>
<reference key="13">
    <citation type="journal article" date="2017" name="Nature">
        <title>Structural basis for ArfA-RF2-mediated translation termination on mRNAs lacking stop codons.</title>
        <authorList>
            <person name="Huter P."/>
            <person name="Mueller C."/>
            <person name="Beckert B."/>
            <person name="Arenz S."/>
            <person name="Berninghausen O."/>
            <person name="Beckmann R."/>
            <person name="Wilson D.N."/>
        </authorList>
    </citation>
    <scope>STRUCTURE BY ELECTRON MICROSCOPY (3.1 ANGSTROMS) OF 70S RIBOSOME IN COMPLEX WITH ARFA AND RF2</scope>
    <scope>SUBUNIT</scope>
</reference>
<reference key="14">
    <citation type="journal article" date="2016" name="Science">
        <title>Translational termination without a stop codon.</title>
        <authorList>
            <person name="James N.R."/>
            <person name="Brown A."/>
            <person name="Gordiyenko Y."/>
            <person name="Ramakrishnan V."/>
        </authorList>
    </citation>
    <scope>STRUCTURE BY ELECTRON MICROSCOPY (2.97 ANGSTROMS) OF 70S RIBOSOME IN COMPLEX WITH ARFA AND RF2</scope>
    <scope>SUBUNIT</scope>
</reference>
<reference key="15">
    <citation type="journal article" date="2017" name="Nature">
        <title>Structural basis of co-translational quality control by ArfA and RF2 bound to ribosome.</title>
        <authorList>
            <person name="Zeng F."/>
            <person name="Chen Y."/>
            <person name="Remis J."/>
            <person name="Shekhar M."/>
            <person name="Phillips J.C."/>
            <person name="Tajkhorshid E."/>
            <person name="Jin H."/>
        </authorList>
    </citation>
    <scope>STRUCTURE BY ELECTRON MICROSCOPY (3.52 ANGSTROMS) OF 70S RIBOSOME IN COMPLEX WITH ARFA AND RF2</scope>
    <scope>SUBUNIT</scope>
</reference>